<feature type="chain" id="PRO_0000290303" description="Host translation inhibitor nsp1" evidence="2">
    <location>
        <begin position="1"/>
        <end position="195"/>
    </location>
</feature>
<feature type="chain" id="PRO_0000290304" description="Non-structural protein 2" evidence="2">
    <location>
        <begin position="196"/>
        <end position="851"/>
    </location>
</feature>
<feature type="chain" id="PRO_0000290305" description="Papain-like proteinase nsp3" evidence="2">
    <location>
        <begin position="852"/>
        <end position="2830"/>
    </location>
</feature>
<feature type="chain" id="PRO_0000290306" description="Non-structural protein 4" evidence="2">
    <location>
        <begin position="2831"/>
        <end position="3338"/>
    </location>
</feature>
<feature type="chain" id="PRO_0000290307" description="3C-like proteinase nsp5" evidence="2">
    <location>
        <begin position="3339"/>
        <end position="3644"/>
    </location>
</feature>
<feature type="chain" id="PRO_0000290308" description="Non-structural protein 6" evidence="2">
    <location>
        <begin position="3645"/>
        <end position="3936"/>
    </location>
</feature>
<feature type="chain" id="PRO_0000290309" description="Non-structural protein 7" evidence="2">
    <location>
        <begin position="3937"/>
        <end position="4019"/>
    </location>
</feature>
<feature type="chain" id="PRO_0000290310" description="Non-structural protein 8" evidence="2">
    <location>
        <begin position="4020"/>
        <end position="4218"/>
    </location>
</feature>
<feature type="chain" id="PRO_0000290311" description="Viral protein genome-linked nsp9" evidence="2">
    <location>
        <begin position="4219"/>
        <end position="4328"/>
    </location>
</feature>
<feature type="chain" id="PRO_0000290312" description="Non-structural protein 10" evidence="2">
    <location>
        <begin position="4329"/>
        <end position="4467"/>
    </location>
</feature>
<feature type="chain" id="PRO_0000290313" description="RNA-directed RNA polymerase nsp12" evidence="2">
    <location>
        <begin position="4468"/>
        <end position="5401"/>
    </location>
</feature>
<feature type="chain" id="PRO_0000290314" description="Helicase nsp13" evidence="2">
    <location>
        <begin position="5402"/>
        <end position="5999"/>
    </location>
</feature>
<feature type="chain" id="PRO_0000290315" description="Guanine-N7 methyltransferase nsp14" evidence="2">
    <location>
        <begin position="6000"/>
        <end position="6523"/>
    </location>
</feature>
<feature type="chain" id="PRO_0000290316" description="Uridylate-specific endoribonuclease nsp15" evidence="2">
    <location>
        <begin position="6524"/>
        <end position="6874"/>
    </location>
</feature>
<feature type="chain" id="PRO_0000290317" description="2'-O-methyltransferase nsp16" evidence="2">
    <location>
        <begin position="6875"/>
        <end position="7182"/>
    </location>
</feature>
<feature type="transmembrane region" description="Helical" evidence="4">
    <location>
        <begin position="2158"/>
        <end position="2178"/>
    </location>
</feature>
<feature type="transmembrane region" description="Helical" evidence="4">
    <location>
        <begin position="2196"/>
        <end position="2216"/>
    </location>
</feature>
<feature type="transmembrane region" description="Helical" evidence="4">
    <location>
        <begin position="2268"/>
        <end position="2288"/>
    </location>
</feature>
<feature type="transmembrane region" description="Helical" evidence="4">
    <location>
        <begin position="2372"/>
        <end position="2392"/>
    </location>
</feature>
<feature type="transmembrane region" description="Helical" evidence="4">
    <location>
        <begin position="2396"/>
        <end position="2416"/>
    </location>
</feature>
<feature type="transmembrane region" description="Helical" evidence="4">
    <location>
        <begin position="2421"/>
        <end position="2441"/>
    </location>
</feature>
<feature type="transmembrane region" description="Helical" evidence="4">
    <location>
        <begin position="2848"/>
        <end position="2868"/>
    </location>
</feature>
<feature type="transmembrane region" description="Helical" evidence="4">
    <location>
        <begin position="3119"/>
        <end position="3139"/>
    </location>
</feature>
<feature type="transmembrane region" description="Helical" evidence="4">
    <location>
        <begin position="3152"/>
        <end position="3172"/>
    </location>
</feature>
<feature type="transmembrane region" description="Helical" evidence="4">
    <location>
        <begin position="3203"/>
        <end position="3223"/>
    </location>
</feature>
<feature type="transmembrane region" description="Helical" evidence="4">
    <location>
        <begin position="3650"/>
        <end position="3670"/>
    </location>
</feature>
<feature type="transmembrane region" description="Helical" evidence="4">
    <location>
        <begin position="3684"/>
        <end position="3704"/>
    </location>
</feature>
<feature type="transmembrane region" description="Helical" evidence="4">
    <location>
        <begin position="3709"/>
        <end position="3729"/>
    </location>
</feature>
<feature type="transmembrane region" description="Helical" evidence="4">
    <location>
        <begin position="3760"/>
        <end position="3777"/>
    </location>
</feature>
<feature type="transmembrane region" description="Helical" evidence="4">
    <location>
        <begin position="3782"/>
        <end position="3802"/>
    </location>
</feature>
<feature type="transmembrane region" description="Helical" evidence="4">
    <location>
        <begin position="3823"/>
        <end position="3843"/>
    </location>
</feature>
<feature type="transmembrane region" description="Helical" evidence="4">
    <location>
        <begin position="3855"/>
        <end position="3875"/>
    </location>
</feature>
<feature type="domain" description="CoV Nsp1 globular" evidence="26">
    <location>
        <begin position="25"/>
        <end position="151"/>
    </location>
</feature>
<feature type="domain" description="BetaCoV Nsp1 C-terminal" evidence="27">
    <location>
        <begin position="159"/>
        <end position="195"/>
    </location>
</feature>
<feature type="domain" description="CoV Nsp2 N-terminal" evidence="28">
    <location>
        <begin position="197"/>
        <end position="473"/>
    </location>
</feature>
<feature type="domain" description="CoV Nsp2 middle" evidence="29">
    <location>
        <begin position="479"/>
        <end position="713"/>
    </location>
</feature>
<feature type="domain" description="CoV Nsp2 C-terminal" evidence="30">
    <location>
        <begin position="715"/>
        <end position="851"/>
    </location>
</feature>
<feature type="domain" description="Ubiquitin-like 1" evidence="5">
    <location>
        <begin position="855"/>
        <end position="964"/>
    </location>
</feature>
<feature type="domain" description="Macro 1" evidence="7">
    <location>
        <begin position="1186"/>
        <end position="1345"/>
    </location>
</feature>
<feature type="domain" description="Macro 2" evidence="7">
    <location>
        <begin position="1354"/>
        <end position="1480"/>
    </location>
</feature>
<feature type="domain" description="DPUP" evidence="11">
    <location>
        <begin position="1480"/>
        <end position="1553"/>
    </location>
</feature>
<feature type="domain" description="Ubiquitin-like 2" evidence="5">
    <location>
        <begin position="1558"/>
        <end position="1613"/>
    </location>
</feature>
<feature type="domain" description="Peptidase C16" evidence="6">
    <location>
        <begin position="1628"/>
        <end position="1902"/>
    </location>
</feature>
<feature type="domain" description="Nucleic acid-binding" evidence="12">
    <location>
        <begin position="1916"/>
        <end position="2033"/>
    </location>
</feature>
<feature type="domain" description="G2M" evidence="33">
    <location>
        <begin position="2059"/>
        <end position="2179"/>
    </location>
</feature>
<feature type="domain" description="3Ecto" evidence="32">
    <location>
        <begin position="2305"/>
        <end position="2371"/>
    </location>
</feature>
<feature type="domain" description="CoV Nsp3 Y" evidence="31">
    <location>
        <begin position="2455"/>
        <end position="2828"/>
    </location>
</feature>
<feature type="domain" description="Nsp4C" evidence="13">
    <location>
        <begin position="3242"/>
        <end position="3338"/>
    </location>
</feature>
<feature type="domain" description="Peptidase C30" evidence="9">
    <location>
        <begin position="3339"/>
        <end position="3644"/>
    </location>
</feature>
<feature type="domain" description="RdRp Nsp7 cofactor" evidence="16">
    <location>
        <begin position="3937"/>
        <end position="4019"/>
    </location>
</feature>
<feature type="domain" description="RdRp Nsp8 cofactor" evidence="17">
    <location>
        <begin position="4020"/>
        <end position="4218"/>
    </location>
</feature>
<feature type="domain" description="Nsp9 ssRNA-binding" evidence="18">
    <location>
        <begin position="4219"/>
        <end position="4328"/>
    </location>
</feature>
<feature type="domain" description="ExoN/MTase coactivator" evidence="19">
    <location>
        <begin position="4329"/>
        <end position="4467"/>
    </location>
</feature>
<feature type="domain" description="NiRAN" evidence="14">
    <location>
        <begin position="4473"/>
        <end position="4730"/>
    </location>
</feature>
<feature type="domain" description="Nsp12 Interface" evidence="34">
    <location>
        <begin position="4735"/>
        <end position="4833"/>
    </location>
</feature>
<feature type="domain" description="Nsp12 RNA-dependent RNA polymerase" evidence="15">
    <location>
        <begin position="4834"/>
        <end position="5401"/>
    </location>
</feature>
<feature type="domain" description="RdRp catalytic" evidence="8">
    <location>
        <begin position="5081"/>
        <end position="5243"/>
    </location>
</feature>
<feature type="domain" description="CV ZBD" evidence="10">
    <location>
        <begin position="5402"/>
        <end position="5514"/>
    </location>
</feature>
<feature type="domain" description="(+)RNA virus helicase ATP-binding">
    <location>
        <begin position="5658"/>
        <end position="5839"/>
    </location>
</feature>
<feature type="domain" description="(+)RNA virus helicase C-terminal">
    <location>
        <begin position="5840"/>
        <end position="6014"/>
    </location>
</feature>
<feature type="domain" description="ExoN" evidence="20">
    <location>
        <begin position="6071"/>
        <end position="6286"/>
    </location>
</feature>
<feature type="domain" description="N7-MTase" evidence="21">
    <location>
        <begin position="6295"/>
        <end position="6523"/>
    </location>
</feature>
<feature type="domain" description="Nsp15 N-terminal oligomerization" evidence="24">
    <location>
        <begin position="6524"/>
        <end position="6584"/>
    </location>
</feature>
<feature type="domain" description="AV-Nsp11N/CoV-Nsp15M" evidence="25">
    <location>
        <begin position="6585"/>
        <end position="6715"/>
    </location>
</feature>
<feature type="domain" description="NendoU" evidence="23">
    <location>
        <begin position="6732"/>
        <end position="6871"/>
    </location>
</feature>
<feature type="domain" description="Nidovirus-type SAM-dependent 2'-O-MTase" evidence="22">
    <location>
        <begin position="6876"/>
        <end position="7170"/>
    </location>
</feature>
<feature type="zinc finger region" description="C4-type" evidence="6">
    <location>
        <begin position="1748"/>
        <end position="1785"/>
    </location>
</feature>
<feature type="zinc finger region" evidence="1">
    <location>
        <begin position="4402"/>
        <end position="4418"/>
    </location>
</feature>
<feature type="zinc finger region" evidence="1">
    <location>
        <begin position="4444"/>
        <end position="4457"/>
    </location>
</feature>
<feature type="region of interest" description="C4" evidence="28">
    <location>
        <begin position="340"/>
        <end position="361"/>
    </location>
</feature>
<feature type="region of interest" description="HD1" evidence="1">
    <location>
        <begin position="2158"/>
        <end position="2441"/>
    </location>
</feature>
<feature type="region of interest" description="Y1" evidence="31">
    <location>
        <begin position="2455"/>
        <end position="2545"/>
    </location>
</feature>
<feature type="region of interest" description="ZF1" evidence="31">
    <location>
        <begin position="2459"/>
        <end position="2472"/>
    </location>
</feature>
<feature type="region of interest" description="ZF2" evidence="31">
    <location>
        <begin position="2505"/>
        <end position="2515"/>
    </location>
</feature>
<feature type="region of interest" description="CoV-Y" evidence="31">
    <location>
        <begin position="2546"/>
        <end position="2828"/>
    </location>
</feature>
<feature type="region of interest" description="Y2" evidence="31">
    <location>
        <begin position="2546"/>
        <end position="2644"/>
    </location>
</feature>
<feature type="region of interest" description="Y3" evidence="31">
    <location>
        <begin position="2645"/>
        <end position="2727"/>
    </location>
</feature>
<feature type="region of interest" description="Y4" evidence="31">
    <location>
        <begin position="2728"/>
        <end position="2828"/>
    </location>
</feature>
<feature type="region of interest" description="HD2" evidence="1">
    <location>
        <begin position="2848"/>
        <end position="3223"/>
    </location>
</feature>
<feature type="region of interest" description="HD3" evidence="1">
    <location>
        <begin position="3650"/>
        <end position="3875"/>
    </location>
</feature>
<feature type="region of interest" description="RdRp Fingers N-ter" evidence="15">
    <location>
        <begin position="4836"/>
        <end position="5050"/>
    </location>
</feature>
<feature type="region of interest" description="RdRp Palm N-ter" evidence="15">
    <location>
        <begin position="5051"/>
        <end position="5089"/>
    </location>
</feature>
<feature type="region of interest" description="RdRp Fingers C-ter" evidence="15">
    <location>
        <begin position="5090"/>
        <end position="5148"/>
    </location>
</feature>
<feature type="region of interest" description="RdRp Palm C-ter" evidence="15">
    <location>
        <begin position="5149"/>
        <end position="5284"/>
    </location>
</feature>
<feature type="region of interest" description="RdRp Thumb" evidence="15">
    <location>
        <begin position="5285"/>
        <end position="5401"/>
    </location>
</feature>
<feature type="region of interest" description="GpppA-binding" evidence="21">
    <location>
        <begin position="6409"/>
        <end position="6423"/>
    </location>
</feature>
<feature type="active site" description="For PL-PRO activity" evidence="6">
    <location>
        <position position="1668"/>
    </location>
</feature>
<feature type="active site" description="For PL-PRO activity" evidence="6">
    <location>
        <position position="1838"/>
    </location>
</feature>
<feature type="active site" description="For PL-PRO activity" evidence="6">
    <location>
        <position position="1853"/>
    </location>
</feature>
<feature type="active site" description="For 3CL-PRO activity" evidence="9">
    <location>
        <position position="3379"/>
    </location>
</feature>
<feature type="active site" description="For 3CL-PRO activity" evidence="9">
    <location>
        <position position="3486"/>
    </location>
</feature>
<feature type="active site" evidence="15">
    <location>
        <position position="5228"/>
    </location>
</feature>
<feature type="active site" evidence="15">
    <location>
        <position position="5229"/>
    </location>
</feature>
<feature type="active site" evidence="15">
    <location>
        <position position="5230"/>
    </location>
</feature>
<feature type="active site" evidence="20">
    <location>
        <position position="6089"/>
    </location>
</feature>
<feature type="active site" evidence="20">
    <location>
        <position position="6091"/>
    </location>
</feature>
<feature type="active site" evidence="20">
    <location>
        <position position="6190"/>
    </location>
</feature>
<feature type="active site" evidence="20">
    <location>
        <position position="6267"/>
    </location>
</feature>
<feature type="active site" evidence="20">
    <location>
        <position position="6272"/>
    </location>
</feature>
<feature type="active site" evidence="23">
    <location>
        <position position="6762"/>
    </location>
</feature>
<feature type="active site" evidence="23">
    <location>
        <position position="6777"/>
    </location>
</feature>
<feature type="active site" evidence="23">
    <location>
        <position position="6817"/>
    </location>
</feature>
<feature type="active site" evidence="22">
    <location>
        <position position="6920"/>
    </location>
</feature>
<feature type="active site" evidence="22">
    <location>
        <position position="7004"/>
    </location>
</feature>
<feature type="active site" evidence="22">
    <location>
        <position position="7044"/>
    </location>
</feature>
<feature type="active site" evidence="22">
    <location>
        <position position="7077"/>
    </location>
</feature>
<feature type="binding site" evidence="28">
    <location>
        <position position="340"/>
    </location>
    <ligand>
        <name>Zn(2+)</name>
        <dbReference type="ChEBI" id="CHEBI:29105"/>
        <label>1</label>
    </ligand>
</feature>
<feature type="binding site" evidence="28">
    <location>
        <position position="343"/>
    </location>
    <ligand>
        <name>Zn(2+)</name>
        <dbReference type="ChEBI" id="CHEBI:29105"/>
        <label>1</label>
    </ligand>
</feature>
<feature type="binding site" evidence="28">
    <location>
        <position position="359"/>
    </location>
    <ligand>
        <name>Zn(2+)</name>
        <dbReference type="ChEBI" id="CHEBI:29105"/>
        <label>1</label>
    </ligand>
</feature>
<feature type="binding site" evidence="28">
    <location>
        <position position="361"/>
    </location>
    <ligand>
        <name>Zn(2+)</name>
        <dbReference type="ChEBI" id="CHEBI:29105"/>
        <label>1</label>
    </ligand>
</feature>
<feature type="binding site" evidence="6">
    <location>
        <position position="1748"/>
    </location>
    <ligand>
        <name>Zn(2+)</name>
        <dbReference type="ChEBI" id="CHEBI:29105"/>
        <label>2</label>
    </ligand>
</feature>
<feature type="binding site" evidence="6">
    <location>
        <position position="1751"/>
    </location>
    <ligand>
        <name>Zn(2+)</name>
        <dbReference type="ChEBI" id="CHEBI:29105"/>
        <label>2</label>
    </ligand>
</feature>
<feature type="binding site" evidence="6">
    <location>
        <position position="1783"/>
    </location>
    <ligand>
        <name>Zn(2+)</name>
        <dbReference type="ChEBI" id="CHEBI:29105"/>
        <label>2</label>
    </ligand>
</feature>
<feature type="binding site" evidence="6">
    <location>
        <position position="1785"/>
    </location>
    <ligand>
        <name>Zn(2+)</name>
        <dbReference type="ChEBI" id="CHEBI:29105"/>
        <label>2</label>
    </ligand>
</feature>
<feature type="binding site" evidence="31">
    <location>
        <position position="2459"/>
    </location>
    <ligand>
        <name>Zn(2+)</name>
        <dbReference type="ChEBI" id="CHEBI:29105"/>
        <label>3</label>
    </ligand>
</feature>
<feature type="binding site" evidence="31">
    <location>
        <position position="2464"/>
    </location>
    <ligand>
        <name>Zn(2+)</name>
        <dbReference type="ChEBI" id="CHEBI:29105"/>
        <label>3</label>
    </ligand>
</feature>
<feature type="binding site" evidence="31">
    <location>
        <position position="2469"/>
    </location>
    <ligand>
        <name>Zn(2+)</name>
        <dbReference type="ChEBI" id="CHEBI:29105"/>
        <label>3</label>
    </ligand>
</feature>
<feature type="binding site" evidence="31">
    <location>
        <position position="2472"/>
    </location>
    <ligand>
        <name>Zn(2+)</name>
        <dbReference type="ChEBI" id="CHEBI:29105"/>
        <label>3</label>
    </ligand>
</feature>
<feature type="binding site" evidence="31">
    <location>
        <position position="2505"/>
    </location>
    <ligand>
        <name>Zn(2+)</name>
        <dbReference type="ChEBI" id="CHEBI:29105"/>
        <label>4</label>
    </ligand>
</feature>
<feature type="binding site" evidence="31">
    <location>
        <position position="2508"/>
    </location>
    <ligand>
        <name>Zn(2+)</name>
        <dbReference type="ChEBI" id="CHEBI:29105"/>
        <label>4</label>
    </ligand>
</feature>
<feature type="binding site" evidence="31">
    <location>
        <position position="2512"/>
    </location>
    <ligand>
        <name>Zn(2+)</name>
        <dbReference type="ChEBI" id="CHEBI:29105"/>
        <label>4</label>
    </ligand>
</feature>
<feature type="binding site" evidence="31">
    <location>
        <position position="2515"/>
    </location>
    <ligand>
        <name>Zn(2+)</name>
        <dbReference type="ChEBI" id="CHEBI:29105"/>
        <label>4</label>
    </ligand>
</feature>
<feature type="binding site" evidence="19">
    <location>
        <position position="4402"/>
    </location>
    <ligand>
        <name>Zn(2+)</name>
        <dbReference type="ChEBI" id="CHEBI:29105"/>
        <label>5</label>
    </ligand>
</feature>
<feature type="binding site" evidence="19">
    <location>
        <position position="4405"/>
    </location>
    <ligand>
        <name>Zn(2+)</name>
        <dbReference type="ChEBI" id="CHEBI:29105"/>
        <label>5</label>
    </ligand>
</feature>
<feature type="binding site" evidence="19">
    <location>
        <position position="4411"/>
    </location>
    <ligand>
        <name>Zn(2+)</name>
        <dbReference type="ChEBI" id="CHEBI:29105"/>
        <label>5</label>
    </ligand>
</feature>
<feature type="binding site" evidence="19">
    <location>
        <position position="4418"/>
    </location>
    <ligand>
        <name>Zn(2+)</name>
        <dbReference type="ChEBI" id="CHEBI:29105"/>
        <label>5</label>
    </ligand>
</feature>
<feature type="binding site" evidence="19">
    <location>
        <position position="4444"/>
    </location>
    <ligand>
        <name>Zn(2+)</name>
        <dbReference type="ChEBI" id="CHEBI:29105"/>
        <label>6</label>
    </ligand>
</feature>
<feature type="binding site" evidence="19">
    <location>
        <position position="4447"/>
    </location>
    <ligand>
        <name>Zn(2+)</name>
        <dbReference type="ChEBI" id="CHEBI:29105"/>
        <label>6</label>
    </ligand>
</feature>
<feature type="binding site" evidence="19">
    <location>
        <position position="4455"/>
    </location>
    <ligand>
        <name>Zn(2+)</name>
        <dbReference type="ChEBI" id="CHEBI:29105"/>
        <label>6</label>
    </ligand>
</feature>
<feature type="binding site" evidence="19">
    <location>
        <position position="4457"/>
    </location>
    <ligand>
        <name>Zn(2+)</name>
        <dbReference type="ChEBI" id="CHEBI:29105"/>
        <label>6</label>
    </ligand>
</feature>
<feature type="binding site" evidence="3">
    <location>
        <position position="4678"/>
    </location>
    <ligand>
        <name>Mn(2+)</name>
        <dbReference type="ChEBI" id="CHEBI:29035"/>
    </ligand>
</feature>
<feature type="binding site" evidence="3">
    <location>
        <position position="4687"/>
    </location>
    <ligand>
        <name>Mn(2+)</name>
        <dbReference type="ChEBI" id="CHEBI:29035"/>
    </ligand>
</feature>
<feature type="binding site" evidence="34">
    <location>
        <position position="4764"/>
    </location>
    <ligand>
        <name>Zn(2+)</name>
        <dbReference type="ChEBI" id="CHEBI:29105"/>
        <label>7</label>
    </ligand>
</feature>
<feature type="binding site" evidence="34">
    <location>
        <position position="4770"/>
    </location>
    <ligand>
        <name>Zn(2+)</name>
        <dbReference type="ChEBI" id="CHEBI:29105"/>
        <label>7</label>
    </ligand>
</feature>
<feature type="binding site" evidence="34">
    <location>
        <position position="4775"/>
    </location>
    <ligand>
        <name>Zn(2+)</name>
        <dbReference type="ChEBI" id="CHEBI:29105"/>
        <label>7</label>
    </ligand>
</feature>
<feature type="binding site" evidence="34">
    <location>
        <position position="4779"/>
    </location>
    <ligand>
        <name>Zn(2+)</name>
        <dbReference type="ChEBI" id="CHEBI:29105"/>
        <label>7</label>
    </ligand>
</feature>
<feature type="binding site" evidence="15">
    <location>
        <position position="4956"/>
    </location>
    <ligand>
        <name>Zn(2+)</name>
        <dbReference type="ChEBI" id="CHEBI:29105"/>
        <label>8</label>
    </ligand>
</feature>
<feature type="binding site" evidence="15">
    <location>
        <position position="5111"/>
    </location>
    <ligand>
        <name>Zn(2+)</name>
        <dbReference type="ChEBI" id="CHEBI:29105"/>
        <label>8</label>
    </ligand>
</feature>
<feature type="binding site" evidence="15">
    <location>
        <position position="5114"/>
    </location>
    <ligand>
        <name>Zn(2+)</name>
        <dbReference type="ChEBI" id="CHEBI:29105"/>
        <label>8</label>
    </ligand>
</feature>
<feature type="binding site" evidence="15">
    <location>
        <position position="5115"/>
    </location>
    <ligand>
        <name>Zn(2+)</name>
        <dbReference type="ChEBI" id="CHEBI:29105"/>
        <label>8</label>
    </ligand>
</feature>
<feature type="binding site" evidence="10">
    <location>
        <position position="5406"/>
    </location>
    <ligand>
        <name>Zn(2+)</name>
        <dbReference type="ChEBI" id="CHEBI:29105"/>
        <label>9</label>
    </ligand>
</feature>
<feature type="binding site" evidence="10">
    <location>
        <position position="5409"/>
    </location>
    <ligand>
        <name>Zn(2+)</name>
        <dbReference type="ChEBI" id="CHEBI:29105"/>
        <label>9</label>
    </ligand>
</feature>
<feature type="binding site" evidence="10">
    <location>
        <position position="5417"/>
    </location>
    <ligand>
        <name>Zn(2+)</name>
        <dbReference type="ChEBI" id="CHEBI:29105"/>
        <label>10</label>
    </ligand>
</feature>
<feature type="binding site" evidence="10">
    <location>
        <position position="5420"/>
    </location>
    <ligand>
        <name>Zn(2+)</name>
        <dbReference type="ChEBI" id="CHEBI:29105"/>
        <label>10</label>
    </ligand>
</feature>
<feature type="binding site" evidence="10">
    <location>
        <position position="5427"/>
    </location>
    <ligand>
        <name>Zn(2+)</name>
        <dbReference type="ChEBI" id="CHEBI:29105"/>
        <label>9</label>
    </ligand>
</feature>
<feature type="binding site" evidence="10">
    <location>
        <position position="5430"/>
    </location>
    <ligand>
        <name>Zn(2+)</name>
        <dbReference type="ChEBI" id="CHEBI:29105"/>
        <label>9</label>
    </ligand>
</feature>
<feature type="binding site" evidence="10">
    <location>
        <position position="5434"/>
    </location>
    <ligand>
        <name>Zn(2+)</name>
        <dbReference type="ChEBI" id="CHEBI:29105"/>
        <label>10</label>
    </ligand>
</feature>
<feature type="binding site" evidence="10">
    <location>
        <position position="5440"/>
    </location>
    <ligand>
        <name>Zn(2+)</name>
        <dbReference type="ChEBI" id="CHEBI:29105"/>
        <label>10</label>
    </ligand>
</feature>
<feature type="binding site" evidence="10">
    <location>
        <position position="5451"/>
    </location>
    <ligand>
        <name>Zn(2+)</name>
        <dbReference type="ChEBI" id="CHEBI:29105"/>
        <label>11</label>
    </ligand>
</feature>
<feature type="binding site" evidence="10">
    <location>
        <position position="5456"/>
    </location>
    <ligand>
        <name>Zn(2+)</name>
        <dbReference type="ChEBI" id="CHEBI:29105"/>
        <label>11</label>
    </ligand>
</feature>
<feature type="binding site" evidence="10">
    <location>
        <position position="5473"/>
    </location>
    <ligand>
        <name>Zn(2+)</name>
        <dbReference type="ChEBI" id="CHEBI:29105"/>
        <label>11</label>
    </ligand>
</feature>
<feature type="binding site" evidence="10">
    <location>
        <position position="5476"/>
    </location>
    <ligand>
        <name>Zn(2+)</name>
        <dbReference type="ChEBI" id="CHEBI:29105"/>
        <label>11</label>
    </ligand>
</feature>
<feature type="binding site" evidence="1">
    <location>
        <begin position="5683"/>
        <end position="5690"/>
    </location>
    <ligand>
        <name>ATP</name>
        <dbReference type="ChEBI" id="CHEBI:30616"/>
    </ligand>
</feature>
<feature type="binding site" evidence="20">
    <location>
        <position position="6206"/>
    </location>
    <ligand>
        <name>Zn(2+)</name>
        <dbReference type="ChEBI" id="CHEBI:29105"/>
        <label>12</label>
    </ligand>
</feature>
<feature type="binding site" evidence="20">
    <location>
        <position position="6209"/>
    </location>
    <ligand>
        <name>Zn(2+)</name>
        <dbReference type="ChEBI" id="CHEBI:29105"/>
        <label>12</label>
    </ligand>
</feature>
<feature type="binding site" evidence="20">
    <location>
        <position position="6225"/>
    </location>
    <ligand>
        <name>Zn(2+)</name>
        <dbReference type="ChEBI" id="CHEBI:29105"/>
        <label>12</label>
    </ligand>
</feature>
<feature type="binding site" evidence="20">
    <location>
        <position position="6228"/>
    </location>
    <ligand>
        <name>Zn(2+)</name>
        <dbReference type="ChEBI" id="CHEBI:29105"/>
        <label>12</label>
    </ligand>
</feature>
<feature type="binding site" evidence="20">
    <location>
        <position position="6256"/>
    </location>
    <ligand>
        <name>Zn(2+)</name>
        <dbReference type="ChEBI" id="CHEBI:29105"/>
        <label>13</label>
    </ligand>
</feature>
<feature type="binding site" evidence="20">
    <location>
        <position position="6260"/>
    </location>
    <ligand>
        <name>Zn(2+)</name>
        <dbReference type="ChEBI" id="CHEBI:29105"/>
        <label>13</label>
    </ligand>
</feature>
<feature type="binding site" evidence="20">
    <location>
        <position position="6263"/>
    </location>
    <ligand>
        <name>Zn(2+)</name>
        <dbReference type="ChEBI" id="CHEBI:29105"/>
        <label>13</label>
    </ligand>
</feature>
<feature type="binding site" evidence="20">
    <location>
        <position position="6278"/>
    </location>
    <ligand>
        <name>Zn(2+)</name>
        <dbReference type="ChEBI" id="CHEBI:29105"/>
        <label>13</label>
    </ligand>
</feature>
<feature type="binding site" evidence="21">
    <location>
        <begin position="6330"/>
        <end position="6336"/>
    </location>
    <ligand>
        <name>S-adenosyl-L-methionine</name>
        <dbReference type="ChEBI" id="CHEBI:59789"/>
    </ligand>
</feature>
<feature type="binding site" evidence="21">
    <location>
        <position position="6447"/>
    </location>
    <ligand>
        <name>Zn(2+)</name>
        <dbReference type="ChEBI" id="CHEBI:29105"/>
        <label>14</label>
    </ligand>
</feature>
<feature type="binding site" evidence="21">
    <location>
        <position position="6469"/>
    </location>
    <ligand>
        <name>Zn(2+)</name>
        <dbReference type="ChEBI" id="CHEBI:29105"/>
        <label>14</label>
    </ligand>
</feature>
<feature type="binding site" evidence="21">
    <location>
        <position position="6480"/>
    </location>
    <ligand>
        <name>Zn(2+)</name>
        <dbReference type="ChEBI" id="CHEBI:29105"/>
        <label>14</label>
    </ligand>
</feature>
<feature type="binding site" evidence="21">
    <location>
        <position position="6483"/>
    </location>
    <ligand>
        <name>Zn(2+)</name>
        <dbReference type="ChEBI" id="CHEBI:29105"/>
        <label>14</label>
    </ligand>
</feature>
<feature type="site" description="Cleavage" evidence="4">
    <location>
        <begin position="195"/>
        <end position="196"/>
    </location>
</feature>
<feature type="site" description="Cleavage; by PL-PRO" evidence="4">
    <location>
        <begin position="851"/>
        <end position="852"/>
    </location>
</feature>
<feature type="site" description="Cleavage; by PL-PRO" evidence="4">
    <location>
        <begin position="2830"/>
        <end position="2831"/>
    </location>
</feature>
<feature type="site" description="Cleavage; by 3CL-PRO" evidence="4">
    <location>
        <begin position="3338"/>
        <end position="3339"/>
    </location>
</feature>
<feature type="site" description="Cleavage; by 3CL-PRO" evidence="4">
    <location>
        <begin position="3644"/>
        <end position="3645"/>
    </location>
</feature>
<feature type="site" description="Cleavage; by 3CL-PRO" evidence="4">
    <location>
        <begin position="3936"/>
        <end position="3937"/>
    </location>
</feature>
<feature type="site" description="Cleavage; by 3CL-PRO" evidence="4">
    <location>
        <begin position="4019"/>
        <end position="4020"/>
    </location>
</feature>
<feature type="site" description="Cleavage; by 3CL-PRO" evidence="4">
    <location>
        <begin position="4218"/>
        <end position="4219"/>
    </location>
</feature>
<feature type="site" description="Cleavage; by 3CL-PRO" evidence="4">
    <location>
        <begin position="4328"/>
        <end position="4329"/>
    </location>
</feature>
<feature type="site" description="Cleavage; by 3CL-PRO" evidence="4">
    <location>
        <begin position="4467"/>
        <end position="4468"/>
    </location>
</feature>
<feature type="site" description="Cleavage; by 3CL-PRO" evidence="4">
    <location>
        <begin position="5401"/>
        <end position="5402"/>
    </location>
</feature>
<feature type="site" description="Cleavage; by 3CL-PRO" evidence="4">
    <location>
        <begin position="5999"/>
        <end position="6000"/>
    </location>
</feature>
<feature type="site" description="Cleavage; by 3CL-PRO" evidence="4">
    <location>
        <begin position="6523"/>
        <end position="6524"/>
    </location>
</feature>
<feature type="site" description="Cleavage; by 3CL-PRO" evidence="4">
    <location>
        <begin position="6874"/>
        <end position="6875"/>
    </location>
</feature>
<feature type="disulfide bond" evidence="32">
    <location>
        <begin position="2321"/>
        <end position="2349"/>
    </location>
</feature>
<feature type="disulfide bond" evidence="32">
    <location>
        <begin position="2339"/>
        <end position="2346"/>
    </location>
</feature>
<dbReference type="EC" id="3.4.19.12"/>
<dbReference type="EC" id="3.4.22.-"/>
<dbReference type="EC" id="2.7.7.48"/>
<dbReference type="EC" id="2.7.7.50"/>
<dbReference type="EC" id="3.6.4.12"/>
<dbReference type="EC" id="3.6.4.13"/>
<dbReference type="EC" id="2.1.1.56"/>
<dbReference type="EC" id="3.1.13.-"/>
<dbReference type="EC" id="4.6.1.-"/>
<dbReference type="EC" id="2.1.1.57"/>
<dbReference type="EMBL" id="EF065509">
    <property type="protein sequence ID" value="ABN10874.1"/>
    <property type="molecule type" value="Genomic_RNA"/>
</dbReference>
<dbReference type="RefSeq" id="YP_001039961.1">
    <molecule id="P0C6W4-1"/>
    <property type="nucleotide sequence ID" value="NC_009020.1"/>
</dbReference>
<dbReference type="IntAct" id="P0C6W4">
    <property type="interactions" value="2"/>
</dbReference>
<dbReference type="BindingDB" id="P0C6W4"/>
<dbReference type="MEROPS" id="C16.011"/>
<dbReference type="KEGG" id="vg:4836003"/>
<dbReference type="SABIO-RK" id="P0C6W4"/>
<dbReference type="Proteomes" id="UP000007451">
    <property type="component" value="Segment"/>
</dbReference>
<dbReference type="GO" id="GO:0044172">
    <property type="term" value="C:host cell endoplasmic reticulum-Golgi intermediate compartment"/>
    <property type="evidence" value="ECO:0007669"/>
    <property type="project" value="UniProtKB-SubCell"/>
</dbReference>
<dbReference type="GO" id="GO:0033644">
    <property type="term" value="C:host cell membrane"/>
    <property type="evidence" value="ECO:0007669"/>
    <property type="project" value="UniProtKB-SubCell"/>
</dbReference>
<dbReference type="GO" id="GO:0044220">
    <property type="term" value="C:host cell perinuclear region of cytoplasm"/>
    <property type="evidence" value="ECO:0007669"/>
    <property type="project" value="UniProtKB-SubCell"/>
</dbReference>
<dbReference type="GO" id="GO:0016020">
    <property type="term" value="C:membrane"/>
    <property type="evidence" value="ECO:0007669"/>
    <property type="project" value="UniProtKB-KW"/>
</dbReference>
<dbReference type="GO" id="GO:0000175">
    <property type="term" value="F:3'-5'-RNA exonuclease activity"/>
    <property type="evidence" value="ECO:0007669"/>
    <property type="project" value="InterPro"/>
</dbReference>
<dbReference type="GO" id="GO:0043139">
    <property type="term" value="F:5'-3' DNA helicase activity"/>
    <property type="evidence" value="ECO:0007669"/>
    <property type="project" value="TreeGrafter"/>
</dbReference>
<dbReference type="GO" id="GO:0005524">
    <property type="term" value="F:ATP binding"/>
    <property type="evidence" value="ECO:0007669"/>
    <property type="project" value="UniProtKB-KW"/>
</dbReference>
<dbReference type="GO" id="GO:0016887">
    <property type="term" value="F:ATP hydrolysis activity"/>
    <property type="evidence" value="ECO:0007669"/>
    <property type="project" value="RHEA"/>
</dbReference>
<dbReference type="GO" id="GO:0004843">
    <property type="term" value="F:cysteine-type deubiquitinase activity"/>
    <property type="evidence" value="ECO:0007669"/>
    <property type="project" value="UniProtKB-EC"/>
</dbReference>
<dbReference type="GO" id="GO:0004197">
    <property type="term" value="F:cysteine-type endopeptidase activity"/>
    <property type="evidence" value="ECO:0007669"/>
    <property type="project" value="InterPro"/>
</dbReference>
<dbReference type="GO" id="GO:0004519">
    <property type="term" value="F:endonuclease activity"/>
    <property type="evidence" value="ECO:0007669"/>
    <property type="project" value="UniProtKB-KW"/>
</dbReference>
<dbReference type="GO" id="GO:0002151">
    <property type="term" value="F:G-quadruplex RNA binding"/>
    <property type="evidence" value="ECO:0007669"/>
    <property type="project" value="InterPro"/>
</dbReference>
<dbReference type="GO" id="GO:0016829">
    <property type="term" value="F:lyase activity"/>
    <property type="evidence" value="ECO:0007669"/>
    <property type="project" value="UniProtKB-KW"/>
</dbReference>
<dbReference type="GO" id="GO:0004483">
    <property type="term" value="F:mRNA (nucleoside-2'-O-)-methyltransferase activity"/>
    <property type="evidence" value="ECO:0007669"/>
    <property type="project" value="InterPro"/>
</dbReference>
<dbReference type="GO" id="GO:0004482">
    <property type="term" value="F:mRNA 5'-cap (guanine-N7-)-methyltransferase activity"/>
    <property type="evidence" value="ECO:0007669"/>
    <property type="project" value="InterPro"/>
</dbReference>
<dbReference type="GO" id="GO:0008242">
    <property type="term" value="F:omega peptidase activity"/>
    <property type="evidence" value="ECO:0007669"/>
    <property type="project" value="InterPro"/>
</dbReference>
<dbReference type="GO" id="GO:0003724">
    <property type="term" value="F:RNA helicase activity"/>
    <property type="evidence" value="ECO:0007669"/>
    <property type="project" value="UniProtKB-EC"/>
</dbReference>
<dbReference type="GO" id="GO:0003968">
    <property type="term" value="F:RNA-directed RNA polymerase activity"/>
    <property type="evidence" value="ECO:0007669"/>
    <property type="project" value="UniProtKB-KW"/>
</dbReference>
<dbReference type="GO" id="GO:0003727">
    <property type="term" value="F:single-stranded RNA binding"/>
    <property type="evidence" value="ECO:0007669"/>
    <property type="project" value="InterPro"/>
</dbReference>
<dbReference type="GO" id="GO:0008270">
    <property type="term" value="F:zinc ion binding"/>
    <property type="evidence" value="ECO:0007669"/>
    <property type="project" value="UniProtKB-KW"/>
</dbReference>
<dbReference type="GO" id="GO:0006351">
    <property type="term" value="P:DNA-templated transcription"/>
    <property type="evidence" value="ECO:0007669"/>
    <property type="project" value="InterPro"/>
</dbReference>
<dbReference type="GO" id="GO:0006508">
    <property type="term" value="P:proteolysis"/>
    <property type="evidence" value="ECO:0007669"/>
    <property type="project" value="UniProtKB-KW"/>
</dbReference>
<dbReference type="GO" id="GO:0010506">
    <property type="term" value="P:regulation of autophagy"/>
    <property type="evidence" value="ECO:0007669"/>
    <property type="project" value="InterPro"/>
</dbReference>
<dbReference type="GO" id="GO:0039520">
    <property type="term" value="P:symbiont-mediated activation of host autophagy"/>
    <property type="evidence" value="ECO:0007669"/>
    <property type="project" value="UniProtKB-KW"/>
</dbReference>
<dbReference type="GO" id="GO:0039595">
    <property type="term" value="P:symbiont-mediated degradation of host mRNA"/>
    <property type="evidence" value="ECO:0007669"/>
    <property type="project" value="UniProtKB-KW"/>
</dbReference>
<dbReference type="GO" id="GO:0039648">
    <property type="term" value="P:symbiont-mediated perturbation of host ubiquitin-like protein modification"/>
    <property type="evidence" value="ECO:0007669"/>
    <property type="project" value="UniProtKB-KW"/>
</dbReference>
<dbReference type="GO" id="GO:0039657">
    <property type="term" value="P:symbiont-mediated suppression of host gene expression"/>
    <property type="evidence" value="ECO:0007669"/>
    <property type="project" value="UniProtKB-KW"/>
</dbReference>
<dbReference type="GO" id="GO:0039579">
    <property type="term" value="P:symbiont-mediated suppression of host ISG15-protein conjugation"/>
    <property type="evidence" value="ECO:0007669"/>
    <property type="project" value="UniProtKB-KW"/>
</dbReference>
<dbReference type="GO" id="GO:0085034">
    <property type="term" value="P:symbiont-mediated suppression of host NF-kappaB cascade"/>
    <property type="evidence" value="ECO:0007669"/>
    <property type="project" value="UniProtKB-KW"/>
</dbReference>
<dbReference type="GO" id="GO:0039502">
    <property type="term" value="P:symbiont-mediated suppression of host type I interferon-mediated signaling pathway"/>
    <property type="evidence" value="ECO:0007669"/>
    <property type="project" value="UniProtKB-KW"/>
</dbReference>
<dbReference type="GO" id="GO:0019082">
    <property type="term" value="P:viral protein processing"/>
    <property type="evidence" value="ECO:0007669"/>
    <property type="project" value="InterPro"/>
</dbReference>
<dbReference type="GO" id="GO:0039694">
    <property type="term" value="P:viral RNA genome replication"/>
    <property type="evidence" value="ECO:0007669"/>
    <property type="project" value="InterPro"/>
</dbReference>
<dbReference type="GO" id="GO:0075523">
    <property type="term" value="P:viral translational frameshifting"/>
    <property type="evidence" value="ECO:0007669"/>
    <property type="project" value="UniProtKB-KW"/>
</dbReference>
<dbReference type="CDD" id="cd21409">
    <property type="entry name" value="1B_cv_Nsp13-like"/>
    <property type="match status" value="1"/>
</dbReference>
<dbReference type="CDD" id="cd21901">
    <property type="entry name" value="alpha_betaCoV_Nsp10"/>
    <property type="match status" value="1"/>
</dbReference>
<dbReference type="CDD" id="cd21560">
    <property type="entry name" value="betaCoV-Nsp6"/>
    <property type="match status" value="1"/>
</dbReference>
<dbReference type="CDD" id="cd21722">
    <property type="entry name" value="betaCoV_Nsp13-helicase"/>
    <property type="match status" value="1"/>
</dbReference>
<dbReference type="CDD" id="cd21659">
    <property type="entry name" value="betaCoV_Nsp14"/>
    <property type="match status" value="1"/>
</dbReference>
<dbReference type="CDD" id="cd21517">
    <property type="entry name" value="betaCoV_Nsp2_MERS-like"/>
    <property type="match status" value="1"/>
</dbReference>
<dbReference type="CDD" id="cd21666">
    <property type="entry name" value="betaCoV_Nsp5_Mpro"/>
    <property type="match status" value="1"/>
</dbReference>
<dbReference type="CDD" id="cd21827">
    <property type="entry name" value="betaCoV_Nsp7"/>
    <property type="match status" value="1"/>
</dbReference>
<dbReference type="CDD" id="cd21831">
    <property type="entry name" value="betaCoV_Nsp8"/>
    <property type="match status" value="1"/>
</dbReference>
<dbReference type="CDD" id="cd21898">
    <property type="entry name" value="betaCoV_Nsp9"/>
    <property type="match status" value="1"/>
</dbReference>
<dbReference type="CDD" id="cd21732">
    <property type="entry name" value="betaCoV_PLPro"/>
    <property type="match status" value="1"/>
</dbReference>
<dbReference type="CDD" id="cd23528">
    <property type="entry name" value="capping_2-OMTase_betaCoV_Nsp16"/>
    <property type="match status" value="1"/>
</dbReference>
<dbReference type="CDD" id="cd21473">
    <property type="entry name" value="cv_Nsp4_TM"/>
    <property type="match status" value="1"/>
</dbReference>
<dbReference type="CDD" id="cd21167">
    <property type="entry name" value="M_alpha_beta_cv_Nsp15-like"/>
    <property type="match status" value="1"/>
</dbReference>
<dbReference type="CDD" id="cd21563">
    <property type="entry name" value="Macro_cv_SUD-M_Nsp3-like"/>
    <property type="match status" value="1"/>
</dbReference>
<dbReference type="CDD" id="cd21557">
    <property type="entry name" value="Macro_X_Nsp3-like"/>
    <property type="match status" value="1"/>
</dbReference>
<dbReference type="CDD" id="cd21878">
    <property type="entry name" value="MERS-CoV-like_Nsp1"/>
    <property type="match status" value="1"/>
</dbReference>
<dbReference type="CDD" id="cd21815">
    <property type="entry name" value="MERS-CoV-like_Nsp3_betaSM"/>
    <property type="match status" value="1"/>
</dbReference>
<dbReference type="CDD" id="cd21823">
    <property type="entry name" value="MERS-CoV-like_Nsp3_NAB"/>
    <property type="match status" value="1"/>
</dbReference>
<dbReference type="CDD" id="cd21592">
    <property type="entry name" value="MERS-CoV-like_RdRp"/>
    <property type="match status" value="1"/>
</dbReference>
<dbReference type="CDD" id="cd21161">
    <property type="entry name" value="NendoU_cv_Nsp15-like"/>
    <property type="match status" value="1"/>
</dbReference>
<dbReference type="CDD" id="cd21171">
    <property type="entry name" value="NTD_alpha_betaCoV_Nsp15-like"/>
    <property type="match status" value="1"/>
</dbReference>
<dbReference type="CDD" id="cd21689">
    <property type="entry name" value="stalk_CoV_Nsp13-like"/>
    <property type="match status" value="1"/>
</dbReference>
<dbReference type="CDD" id="cd21523">
    <property type="entry name" value="SUD_C_MERS-CoV_Nsp3"/>
    <property type="match status" value="1"/>
</dbReference>
<dbReference type="CDD" id="cd21716">
    <property type="entry name" value="TM_Y_MERS-CoV-like_Nsp3_C"/>
    <property type="match status" value="1"/>
</dbReference>
<dbReference type="CDD" id="cd21467">
    <property type="entry name" value="Ubl1_cv_Nsp3_N-like"/>
    <property type="match status" value="1"/>
</dbReference>
<dbReference type="CDD" id="cd21401">
    <property type="entry name" value="ZBD_cv_Nsp13-like"/>
    <property type="match status" value="1"/>
</dbReference>
<dbReference type="FunFam" id="3.30.160.820:FF:000001">
    <property type="entry name" value="Orf1ab polyprotein"/>
    <property type="match status" value="1"/>
</dbReference>
<dbReference type="FunFam" id="3.40.50.150:FF:000162">
    <property type="entry name" value="Orf1ab polyprotein"/>
    <property type="match status" value="1"/>
</dbReference>
<dbReference type="FunFam" id="3.40.50.300:FF:001139">
    <property type="entry name" value="Orf1ab polyprotein"/>
    <property type="match status" value="1"/>
</dbReference>
<dbReference type="FunFam" id="1.10.150.420:FF:000001">
    <property type="entry name" value="Replicase polyprotein"/>
    <property type="match status" value="1"/>
</dbReference>
<dbReference type="FunFam" id="2.40.10.10:FF:000045">
    <property type="entry name" value="Replicase polyprotein 1a"/>
    <property type="match status" value="1"/>
</dbReference>
<dbReference type="Gene3D" id="1.10.8.1190">
    <property type="match status" value="1"/>
</dbReference>
<dbReference type="Gene3D" id="2.60.120.1680">
    <property type="match status" value="1"/>
</dbReference>
<dbReference type="Gene3D" id="3.10.20.350">
    <property type="match status" value="1"/>
</dbReference>
<dbReference type="Gene3D" id="3.10.20.540">
    <property type="match status" value="1"/>
</dbReference>
<dbReference type="Gene3D" id="3.40.50.11580">
    <property type="match status" value="1"/>
</dbReference>
<dbReference type="Gene3D" id="6.10.250.2820">
    <property type="match status" value="1"/>
</dbReference>
<dbReference type="Gene3D" id="1.10.150.420">
    <property type="entry name" value="Coronavirus nonstructural protein 4 C-terminus"/>
    <property type="match status" value="1"/>
</dbReference>
<dbReference type="Gene3D" id="3.40.220.10">
    <property type="entry name" value="Leucine Aminopeptidase, subunit E, domain 1"/>
    <property type="match status" value="1"/>
</dbReference>
<dbReference type="Gene3D" id="1.10.1840.10">
    <property type="entry name" value="main proteinase (3clpro) structure, domain 3"/>
    <property type="match status" value="1"/>
</dbReference>
<dbReference type="Gene3D" id="3.30.160.820">
    <property type="entry name" value="Nsp15 N-terminal domain-like"/>
    <property type="match status" value="1"/>
</dbReference>
<dbReference type="Gene3D" id="3.40.220.20">
    <property type="entry name" value="Nsp3, SUD-M subdomain"/>
    <property type="match status" value="1"/>
</dbReference>
<dbReference type="Gene3D" id="1.10.8.370">
    <property type="entry name" value="nsp7 replicase"/>
    <property type="match status" value="1"/>
</dbReference>
<dbReference type="Gene3D" id="3.30.70.3540">
    <property type="entry name" value="Nsp8 replicase, head domain"/>
    <property type="match status" value="1"/>
</dbReference>
<dbReference type="Gene3D" id="3.40.50.300">
    <property type="entry name" value="P-loop containing nucleotide triphosphate hydrolases"/>
    <property type="match status" value="2"/>
</dbReference>
<dbReference type="Gene3D" id="2.40.10.250">
    <property type="entry name" value="Replicase NSP9"/>
    <property type="match status" value="1"/>
</dbReference>
<dbReference type="Gene3D" id="3.40.50.11020">
    <property type="entry name" value="Replicase polyprotein, nucleic acid-binding domain"/>
    <property type="match status" value="1"/>
</dbReference>
<dbReference type="Gene3D" id="2.40.10.10">
    <property type="entry name" value="Trypsin-like serine proteases"/>
    <property type="match status" value="2"/>
</dbReference>
<dbReference type="Gene3D" id="3.40.50.150">
    <property type="entry name" value="Vaccinia Virus protein VP39"/>
    <property type="match status" value="1"/>
</dbReference>
<dbReference type="InterPro" id="IPR027351">
    <property type="entry name" value="(+)RNA_virus_helicase_core_dom"/>
</dbReference>
<dbReference type="InterPro" id="IPR046443">
    <property type="entry name" value="a/bCoV_NSP1_glob"/>
</dbReference>
<dbReference type="InterPro" id="IPR046440">
    <property type="entry name" value="AV_NSP11N_COV_NSP15M"/>
</dbReference>
<dbReference type="InterPro" id="IPR046442">
    <property type="entry name" value="bCoV_NSP1_C"/>
</dbReference>
<dbReference type="InterPro" id="IPR050534">
    <property type="entry name" value="Coronavir_polyprotein_1ab"/>
</dbReference>
<dbReference type="InterPro" id="IPR043608">
    <property type="entry name" value="CoV_NSP15_M"/>
</dbReference>
<dbReference type="InterPro" id="IPR043606">
    <property type="entry name" value="CoV_NSP15_N"/>
</dbReference>
<dbReference type="InterPro" id="IPR043613">
    <property type="entry name" value="CoV_NSP2_C"/>
</dbReference>
<dbReference type="InterPro" id="IPR047573">
    <property type="entry name" value="CoV_NSP2_M"/>
</dbReference>
<dbReference type="InterPro" id="IPR049894">
    <property type="entry name" value="COV_NSP3_3ECTO"/>
</dbReference>
<dbReference type="InterPro" id="IPR043611">
    <property type="entry name" value="CoV_NSP3_C"/>
</dbReference>
<dbReference type="InterPro" id="IPR047566">
    <property type="entry name" value="CoV_NSP3_Y"/>
</dbReference>
<dbReference type="InterPro" id="IPR032505">
    <property type="entry name" value="CoV_NSP4_C"/>
</dbReference>
<dbReference type="InterPro" id="IPR043612">
    <property type="entry name" value="CoV_NSP4_N"/>
</dbReference>
<dbReference type="InterPro" id="IPR043502">
    <property type="entry name" value="DNA/RNA_pol_sf"/>
</dbReference>
<dbReference type="InterPro" id="IPR041679">
    <property type="entry name" value="DNA2/NAM7-like_C"/>
</dbReference>
<dbReference type="InterPro" id="IPR022733">
    <property type="entry name" value="DPUP_SUD_C_bCoV"/>
</dbReference>
<dbReference type="InterPro" id="IPR037227">
    <property type="entry name" value="EndoU-like"/>
</dbReference>
<dbReference type="InterPro" id="IPR002589">
    <property type="entry name" value="Macro_dom"/>
</dbReference>
<dbReference type="InterPro" id="IPR043472">
    <property type="entry name" value="Macro_dom-like"/>
</dbReference>
<dbReference type="InterPro" id="IPR044371">
    <property type="entry name" value="Macro_X_NSP3-like"/>
</dbReference>
<dbReference type="InterPro" id="IPR046435">
    <property type="entry name" value="N7_MTase_CoV"/>
</dbReference>
<dbReference type="InterPro" id="IPR043609">
    <property type="entry name" value="NendoU_nidovirus"/>
</dbReference>
<dbReference type="InterPro" id="IPR044863">
    <property type="entry name" value="NIRAN"/>
</dbReference>
<dbReference type="InterPro" id="IPR046438">
    <property type="entry name" value="NIV_2_O_MTASE"/>
</dbReference>
<dbReference type="InterPro" id="IPR046436">
    <property type="entry name" value="NIV_EXON"/>
</dbReference>
<dbReference type="InterPro" id="IPR036333">
    <property type="entry name" value="NSP10_sf_CoV"/>
</dbReference>
<dbReference type="InterPro" id="IPR047570">
    <property type="entry name" value="NSP12_IF_CoV"/>
</dbReference>
<dbReference type="InterPro" id="IPR044343">
    <property type="entry name" value="NSP13_1B_dom_CoV"/>
</dbReference>
<dbReference type="InterPro" id="IPR048673">
    <property type="entry name" value="NSP13_stalk_CoV"/>
</dbReference>
<dbReference type="InterPro" id="IPR048672">
    <property type="entry name" value="NSP13_ZBD_CoV"/>
</dbReference>
<dbReference type="InterPro" id="IPR027352">
    <property type="entry name" value="NSP13_ZBD_CoV-like"/>
</dbReference>
<dbReference type="InterPro" id="IPR044315">
    <property type="entry name" value="NSP14_betaCoV"/>
</dbReference>
<dbReference type="InterPro" id="IPR009466">
    <property type="entry name" value="NSP14_CoV"/>
</dbReference>
<dbReference type="InterPro" id="IPR044330">
    <property type="entry name" value="NSP15_alpha_betaCoV_N"/>
</dbReference>
<dbReference type="InterPro" id="IPR044322">
    <property type="entry name" value="NSP15_M_alpha_beta_CoV"/>
</dbReference>
<dbReference type="InterPro" id="IPR043174">
    <property type="entry name" value="NSP15_middle_sf"/>
</dbReference>
<dbReference type="InterPro" id="IPR042515">
    <property type="entry name" value="NSP15_N_CoV"/>
</dbReference>
<dbReference type="InterPro" id="IPR044401">
    <property type="entry name" value="NSP15_NendoU_CoV"/>
</dbReference>
<dbReference type="InterPro" id="IPR009461">
    <property type="entry name" value="NSP16_CoV-like"/>
</dbReference>
<dbReference type="InterPro" id="IPR021590">
    <property type="entry name" value="NSP1_glob_bCoV"/>
</dbReference>
<dbReference type="InterPro" id="IPR044388">
    <property type="entry name" value="NSP2_MERS-like"/>
</dbReference>
<dbReference type="InterPro" id="IPR043615">
    <property type="entry name" value="NSP2_N_CoV"/>
</dbReference>
<dbReference type="InterPro" id="IPR024375">
    <property type="entry name" value="NSP3_bCoV"/>
</dbReference>
<dbReference type="InterPro" id="IPR047567">
    <property type="entry name" value="NSP3_G2M_bCoV"/>
</dbReference>
<dbReference type="InterPro" id="IPR032592">
    <property type="entry name" value="NSP3_NAB_bCoV"/>
</dbReference>
<dbReference type="InterPro" id="IPR042570">
    <property type="entry name" value="NSP3_NAB_bCoV_sf"/>
</dbReference>
<dbReference type="InterPro" id="IPR038400">
    <property type="entry name" value="NSP3_SUD-M_sf_bCoV"/>
</dbReference>
<dbReference type="InterPro" id="IPR044382">
    <property type="entry name" value="NSP3_SUD_C_MERS-CoV"/>
</dbReference>
<dbReference type="InterPro" id="IPR044357">
    <property type="entry name" value="NSP3_Ubl1_dom_CoV"/>
</dbReference>
<dbReference type="InterPro" id="IPR044353">
    <property type="entry name" value="Nsp3_Ubl2_dom_CoV"/>
</dbReference>
<dbReference type="InterPro" id="IPR038083">
    <property type="entry name" value="NSP3A-like"/>
</dbReference>
<dbReference type="InterPro" id="IPR038123">
    <property type="entry name" value="NSP4_C_sf_CoV"/>
</dbReference>
<dbReference type="InterPro" id="IPR044367">
    <property type="entry name" value="NSP6_betaCoV"/>
</dbReference>
<dbReference type="InterPro" id="IPR043610">
    <property type="entry name" value="NSP6_CoV"/>
</dbReference>
<dbReference type="InterPro" id="IPR014828">
    <property type="entry name" value="NSP7_CoV"/>
</dbReference>
<dbReference type="InterPro" id="IPR037204">
    <property type="entry name" value="NSP7_sf_CoV"/>
</dbReference>
<dbReference type="InterPro" id="IPR014829">
    <property type="entry name" value="NSP8_CoV"/>
</dbReference>
<dbReference type="InterPro" id="IPR037230">
    <property type="entry name" value="NSP8_sf_CoV"/>
</dbReference>
<dbReference type="InterPro" id="IPR014822">
    <property type="entry name" value="NSP9_CoV"/>
</dbReference>
<dbReference type="InterPro" id="IPR036499">
    <property type="entry name" value="NSP9_sf_CoV"/>
</dbReference>
<dbReference type="InterPro" id="IPR027417">
    <property type="entry name" value="P-loop_NTPase"/>
</dbReference>
<dbReference type="InterPro" id="IPR013016">
    <property type="entry name" value="Peptidase_C16_CoV"/>
</dbReference>
<dbReference type="InterPro" id="IPR008740">
    <property type="entry name" value="Peptidase_C30_CoV"/>
</dbReference>
<dbReference type="InterPro" id="IPR043477">
    <property type="entry name" value="Peptidase_C30_dom3_CoV"/>
</dbReference>
<dbReference type="InterPro" id="IPR009003">
    <property type="entry name" value="Peptidase_S1_PA"/>
</dbReference>
<dbReference type="InterPro" id="IPR043504">
    <property type="entry name" value="Peptidase_S1_PA_chymotrypsin"/>
</dbReference>
<dbReference type="InterPro" id="IPR043177">
    <property type="entry name" value="PLpro_N_sf_CoV"/>
</dbReference>
<dbReference type="InterPro" id="IPR043503">
    <property type="entry name" value="PLpro_palm_finger_dom_CoV"/>
</dbReference>
<dbReference type="InterPro" id="IPR043178">
    <property type="entry name" value="PLpro_thumb_sf_CoV"/>
</dbReference>
<dbReference type="InterPro" id="IPR046441">
    <property type="entry name" value="RdRp_CoV"/>
</dbReference>
<dbReference type="InterPro" id="IPR044350">
    <property type="entry name" value="RdRp_MERS-CoV-like"/>
</dbReference>
<dbReference type="InterPro" id="IPR009469">
    <property type="entry name" value="RdRp_N_CoV"/>
</dbReference>
<dbReference type="InterPro" id="IPR001205">
    <property type="entry name" value="RNA-dir_pol_C"/>
</dbReference>
<dbReference type="InterPro" id="IPR007094">
    <property type="entry name" value="RNA-dir_pol_PSvirus"/>
</dbReference>
<dbReference type="InterPro" id="IPR018995">
    <property type="entry name" value="RNA_synth_NSP10_CoV"/>
</dbReference>
<dbReference type="InterPro" id="IPR029063">
    <property type="entry name" value="SAM-dependent_MTases_sf"/>
</dbReference>
<dbReference type="PANTHER" id="PTHR43788:SF8">
    <property type="entry name" value="DNA-BINDING PROTEIN SMUBP-2"/>
    <property type="match status" value="1"/>
</dbReference>
<dbReference type="PANTHER" id="PTHR43788">
    <property type="entry name" value="DNA2/NAM7 HELICASE FAMILY MEMBER"/>
    <property type="match status" value="1"/>
</dbReference>
<dbReference type="Pfam" id="PF13087">
    <property type="entry name" value="AAA_12"/>
    <property type="match status" value="1"/>
</dbReference>
<dbReference type="Pfam" id="PF13604">
    <property type="entry name" value="AAA_30"/>
    <property type="match status" value="1"/>
</dbReference>
<dbReference type="Pfam" id="PF16251">
    <property type="entry name" value="bCoV_NAB"/>
    <property type="match status" value="1"/>
</dbReference>
<dbReference type="Pfam" id="PF11501">
    <property type="entry name" value="bCoV_NSP1"/>
    <property type="match status" value="1"/>
</dbReference>
<dbReference type="Pfam" id="PF11633">
    <property type="entry name" value="bCoV_SUD_M"/>
    <property type="match status" value="1"/>
</dbReference>
<dbReference type="Pfam" id="PF06471">
    <property type="entry name" value="CoV_ExoN"/>
    <property type="match status" value="1"/>
</dbReference>
<dbReference type="Pfam" id="PF06460">
    <property type="entry name" value="CoV_Methyltr_2"/>
    <property type="match status" value="1"/>
</dbReference>
<dbReference type="Pfam" id="PF09401">
    <property type="entry name" value="CoV_NSP10"/>
    <property type="match status" value="1"/>
</dbReference>
<dbReference type="Pfam" id="PF20631">
    <property type="entry name" value="CoV_NSP13_1B"/>
    <property type="match status" value="1"/>
</dbReference>
<dbReference type="Pfam" id="PF20633">
    <property type="entry name" value="CoV_NSP13_stalk"/>
    <property type="match status" value="1"/>
</dbReference>
<dbReference type="Pfam" id="PF20632">
    <property type="entry name" value="CoV_NSP13_ZBD"/>
    <property type="match status" value="1"/>
</dbReference>
<dbReference type="Pfam" id="PF19215">
    <property type="entry name" value="CoV_NSP15_C"/>
    <property type="match status" value="1"/>
</dbReference>
<dbReference type="Pfam" id="PF19216">
    <property type="entry name" value="CoV_NSP15_M"/>
    <property type="match status" value="1"/>
</dbReference>
<dbReference type="Pfam" id="PF19219">
    <property type="entry name" value="CoV_NSP15_N"/>
    <property type="match status" value="1"/>
</dbReference>
<dbReference type="Pfam" id="PF19212">
    <property type="entry name" value="CoV_NSP2_C"/>
    <property type="match status" value="1"/>
</dbReference>
<dbReference type="Pfam" id="PF19211">
    <property type="entry name" value="CoV_NSP2_N"/>
    <property type="match status" value="1"/>
</dbReference>
<dbReference type="Pfam" id="PF19218">
    <property type="entry name" value="CoV_NSP3_C"/>
    <property type="match status" value="1"/>
</dbReference>
<dbReference type="Pfam" id="PF16348">
    <property type="entry name" value="CoV_NSP4_C"/>
    <property type="match status" value="1"/>
</dbReference>
<dbReference type="Pfam" id="PF19217">
    <property type="entry name" value="CoV_NSP4_N"/>
    <property type="match status" value="1"/>
</dbReference>
<dbReference type="Pfam" id="PF19213">
    <property type="entry name" value="CoV_NSP6"/>
    <property type="match status" value="1"/>
</dbReference>
<dbReference type="Pfam" id="PF08716">
    <property type="entry name" value="CoV_NSP7"/>
    <property type="match status" value="1"/>
</dbReference>
<dbReference type="Pfam" id="PF08717">
    <property type="entry name" value="CoV_NSP8"/>
    <property type="match status" value="1"/>
</dbReference>
<dbReference type="Pfam" id="PF08710">
    <property type="entry name" value="CoV_NSP9"/>
    <property type="match status" value="1"/>
</dbReference>
<dbReference type="Pfam" id="PF08715">
    <property type="entry name" value="CoV_peptidase"/>
    <property type="match status" value="1"/>
</dbReference>
<dbReference type="Pfam" id="PF06478">
    <property type="entry name" value="CoV_RPol_N"/>
    <property type="match status" value="1"/>
</dbReference>
<dbReference type="Pfam" id="PF01661">
    <property type="entry name" value="Macro"/>
    <property type="match status" value="1"/>
</dbReference>
<dbReference type="Pfam" id="PF05409">
    <property type="entry name" value="Peptidase_C30"/>
    <property type="match status" value="1"/>
</dbReference>
<dbReference type="Pfam" id="PF00680">
    <property type="entry name" value="RdRP_1"/>
    <property type="match status" value="1"/>
</dbReference>
<dbReference type="SMART" id="SM00506">
    <property type="entry name" value="A1pp"/>
    <property type="match status" value="1"/>
</dbReference>
<dbReference type="SUPFAM" id="SSF144246">
    <property type="entry name" value="Coronavirus NSP10-like"/>
    <property type="match status" value="1"/>
</dbReference>
<dbReference type="SUPFAM" id="SSF140367">
    <property type="entry name" value="Coronavirus NSP7-like"/>
    <property type="match status" value="1"/>
</dbReference>
<dbReference type="SUPFAM" id="SSF143076">
    <property type="entry name" value="Coronavirus NSP8-like"/>
    <property type="match status" value="1"/>
</dbReference>
<dbReference type="SUPFAM" id="SSF56672">
    <property type="entry name" value="DNA/RNA polymerases"/>
    <property type="match status" value="1"/>
</dbReference>
<dbReference type="SUPFAM" id="SSF142877">
    <property type="entry name" value="EndoU-like"/>
    <property type="match status" value="1"/>
</dbReference>
<dbReference type="SUPFAM" id="SSF52949">
    <property type="entry name" value="Macro domain-like"/>
    <property type="match status" value="1"/>
</dbReference>
<dbReference type="SUPFAM" id="SSF159936">
    <property type="entry name" value="NSP3A-like"/>
    <property type="match status" value="1"/>
</dbReference>
<dbReference type="SUPFAM" id="SSF52540">
    <property type="entry name" value="P-loop containing nucleoside triphosphate hydrolases"/>
    <property type="match status" value="1"/>
</dbReference>
<dbReference type="SUPFAM" id="SSF101816">
    <property type="entry name" value="Replicase NSP9"/>
    <property type="match status" value="1"/>
</dbReference>
<dbReference type="SUPFAM" id="SSF53335">
    <property type="entry name" value="S-adenosyl-L-methionine-dependent methyltransferases"/>
    <property type="match status" value="1"/>
</dbReference>
<dbReference type="SUPFAM" id="SSF50494">
    <property type="entry name" value="Trypsin-like serine proteases"/>
    <property type="match status" value="1"/>
</dbReference>
<dbReference type="PROSITE" id="PS51961">
    <property type="entry name" value="AV_NSP11N_COV_NSP15M"/>
    <property type="match status" value="1"/>
</dbReference>
<dbReference type="PROSITE" id="PS51963">
    <property type="entry name" value="BCOV_NSP1_C"/>
    <property type="match status" value="1"/>
</dbReference>
<dbReference type="PROSITE" id="PS51942">
    <property type="entry name" value="BCOV_NSP3C_C"/>
    <property type="match status" value="1"/>
</dbReference>
<dbReference type="PROSITE" id="PS51941">
    <property type="entry name" value="BCOV_NSP3C_M"/>
    <property type="match status" value="1"/>
</dbReference>
<dbReference type="PROSITE" id="PS51994">
    <property type="entry name" value="BCOV_NSP3E_G2M"/>
    <property type="match status" value="1"/>
</dbReference>
<dbReference type="PROSITE" id="PS51945">
    <property type="entry name" value="BCOV_NSP3E_NAB"/>
    <property type="match status" value="1"/>
</dbReference>
<dbReference type="PROSITE" id="PS51993">
    <property type="entry name" value="COV_3ECTO"/>
    <property type="match status" value="1"/>
</dbReference>
<dbReference type="PROSITE" id="PS51952">
    <property type="entry name" value="COV_EXON_MTASE_COACT"/>
    <property type="match status" value="1"/>
</dbReference>
<dbReference type="PROSITE" id="PS51954">
    <property type="entry name" value="COV_N7_MTASE"/>
    <property type="match status" value="1"/>
</dbReference>
<dbReference type="PROSITE" id="PS51962">
    <property type="entry name" value="COV_NSP1"/>
    <property type="match status" value="1"/>
</dbReference>
<dbReference type="PROSITE" id="PS52000">
    <property type="entry name" value="COV_NSP12_IF"/>
    <property type="match status" value="1"/>
</dbReference>
<dbReference type="PROSITE" id="PS51948">
    <property type="entry name" value="COV_NSP12_RDRP"/>
    <property type="match status" value="1"/>
</dbReference>
<dbReference type="PROSITE" id="PS51960">
    <property type="entry name" value="COV_NSP15_NTD"/>
    <property type="match status" value="1"/>
</dbReference>
<dbReference type="PROSITE" id="PS51991">
    <property type="entry name" value="COV_NSP2_C"/>
    <property type="match status" value="1"/>
</dbReference>
<dbReference type="PROSITE" id="PS51990">
    <property type="entry name" value="COV_NSP2_M"/>
    <property type="match status" value="1"/>
</dbReference>
<dbReference type="PROSITE" id="PS51989">
    <property type="entry name" value="COV_NSP2_N"/>
    <property type="match status" value="1"/>
</dbReference>
<dbReference type="PROSITE" id="PS51992">
    <property type="entry name" value="COV_NSP3_Y"/>
    <property type="match status" value="1"/>
</dbReference>
<dbReference type="PROSITE" id="PS51943">
    <property type="entry name" value="COV_NSP3A_UBL"/>
    <property type="match status" value="1"/>
</dbReference>
<dbReference type="PROSITE" id="PS51944">
    <property type="entry name" value="COV_NSP3D_UBL"/>
    <property type="match status" value="1"/>
</dbReference>
<dbReference type="PROSITE" id="PS51946">
    <property type="entry name" value="COV_NSP4C"/>
    <property type="match status" value="1"/>
</dbReference>
<dbReference type="PROSITE" id="PS51949">
    <property type="entry name" value="COV_NSP7"/>
    <property type="match status" value="1"/>
</dbReference>
<dbReference type="PROSITE" id="PS51950">
    <property type="entry name" value="COV_NSP8"/>
    <property type="match status" value="1"/>
</dbReference>
<dbReference type="PROSITE" id="PS51951">
    <property type="entry name" value="COV_NSP9_SSRNA_BD"/>
    <property type="match status" value="1"/>
</dbReference>
<dbReference type="PROSITE" id="PS51653">
    <property type="entry name" value="CV_ZBD"/>
    <property type="match status" value="1"/>
</dbReference>
<dbReference type="PROSITE" id="PS51442">
    <property type="entry name" value="M_PRO"/>
    <property type="match status" value="1"/>
</dbReference>
<dbReference type="PROSITE" id="PS51154">
    <property type="entry name" value="MACRO"/>
    <property type="match status" value="1"/>
</dbReference>
<dbReference type="PROSITE" id="PS51958">
    <property type="entry name" value="NENDOU"/>
    <property type="match status" value="1"/>
</dbReference>
<dbReference type="PROSITE" id="PS51947">
    <property type="entry name" value="NIRAN"/>
    <property type="match status" value="1"/>
</dbReference>
<dbReference type="PROSITE" id="PS51955">
    <property type="entry name" value="NIV_2_O_MTASE"/>
    <property type="match status" value="1"/>
</dbReference>
<dbReference type="PROSITE" id="PS51953">
    <property type="entry name" value="NIV_EXON"/>
    <property type="match status" value="1"/>
</dbReference>
<dbReference type="PROSITE" id="PS51124">
    <property type="entry name" value="PEPTIDASE_C16"/>
    <property type="match status" value="1"/>
</dbReference>
<dbReference type="PROSITE" id="PS51657">
    <property type="entry name" value="PSRV_HELICASE"/>
    <property type="match status" value="1"/>
</dbReference>
<dbReference type="PROSITE" id="PS50507">
    <property type="entry name" value="RDRP_SSRNA_POS"/>
    <property type="match status" value="1"/>
</dbReference>
<protein>
    <recommendedName>
        <fullName>Replicase polyprotein 1ab</fullName>
        <shortName>pp1ab</shortName>
    </recommendedName>
    <alternativeName>
        <fullName>ORF1ab polyprotein</fullName>
    </alternativeName>
    <component>
        <recommendedName>
            <fullName>Host translation inhibitor nsp1</fullName>
            <shortName>nsp1</shortName>
        </recommendedName>
        <alternativeName>
            <fullName>Leader protein</fullName>
        </alternativeName>
    </component>
    <component>
        <recommendedName>
            <fullName>Non-structural protein 2</fullName>
            <shortName>nsp2</shortName>
        </recommendedName>
        <alternativeName>
            <fullName>p65 homolog</fullName>
        </alternativeName>
    </component>
    <component>
        <recommendedName>
            <fullName>Papain-like proteinase nsp3</fullName>
            <shortName>PL-PRO</shortName>
            <ecNumber>3.4.19.12</ecNumber>
            <ecNumber>3.4.22.-</ecNumber>
        </recommendedName>
        <alternativeName>
            <fullName>Non-structural protein 3</fullName>
            <shortName>nsp3</shortName>
        </alternativeName>
    </component>
    <component>
        <recommendedName>
            <fullName>Non-structural protein 4</fullName>
            <shortName>nsp4</shortName>
        </recommendedName>
    </component>
    <component>
        <recommendedName>
            <fullName>3C-like proteinase nsp5</fullName>
            <shortName>3CL-PRO</shortName>
            <shortName>3CLp</shortName>
            <ecNumber>3.4.22.-</ecNumber>
        </recommendedName>
        <alternativeName>
            <fullName>nsp5</fullName>
        </alternativeName>
    </component>
    <component>
        <recommendedName>
            <fullName>Non-structural protein 6</fullName>
            <shortName>nsp6</shortName>
        </recommendedName>
    </component>
    <component>
        <recommendedName>
            <fullName>Non-structural protein 7</fullName>
            <shortName>nsp7</shortName>
        </recommendedName>
    </component>
    <component>
        <recommendedName>
            <fullName>Non-structural protein 8</fullName>
            <shortName>nsp8</shortName>
        </recommendedName>
    </component>
    <component>
        <recommendedName>
            <fullName>Viral protein genome-linked nsp9</fullName>
        </recommendedName>
        <alternativeName>
            <fullName>Non-structural protein 9</fullName>
            <shortName>nsp9</shortName>
        </alternativeName>
        <alternativeName>
            <fullName>RNA-capping enzyme subunit nsp9</fullName>
        </alternativeName>
    </component>
    <component>
        <recommendedName>
            <fullName>Non-structural protein 10</fullName>
            <shortName>nsp10</shortName>
        </recommendedName>
        <alternativeName>
            <fullName>Growth factor-like peptide</fullName>
            <shortName>GFL</shortName>
        </alternativeName>
    </component>
    <component>
        <recommendedName>
            <fullName>RNA-directed RNA polymerase nsp12</fullName>
            <shortName>Pol</shortName>
            <shortName>RdRp</shortName>
            <ecNumber>2.7.7.48</ecNumber>
            <ecNumber>2.7.7.50</ecNumber>
        </recommendedName>
        <alternativeName>
            <fullName>nsp12</fullName>
        </alternativeName>
    </component>
    <component>
        <recommendedName>
            <fullName>Helicase nsp13</fullName>
            <shortName>Hel</shortName>
            <ecNumber>3.6.4.12</ecNumber>
            <ecNumber>3.6.4.13</ecNumber>
        </recommendedName>
        <alternativeName>
            <fullName>nsp13</fullName>
        </alternativeName>
    </component>
    <component>
        <recommendedName>
            <fullName>Guanine-N7 methyltransferase nsp14</fullName>
            <shortName>ExoN</shortName>
            <ecNumber>2.1.1.56</ecNumber>
            <ecNumber>3.1.13.-</ecNumber>
        </recommendedName>
        <alternativeName>
            <fullName>nsp14</fullName>
        </alternativeName>
    </component>
    <component>
        <recommendedName>
            <fullName>Uridylate-specific endoribonuclease nsp15</fullName>
            <ecNumber>4.6.1.-</ecNumber>
        </recommendedName>
        <alternativeName>
            <fullName>NendoU</fullName>
        </alternativeName>
        <alternativeName>
            <fullName>nsp15</fullName>
        </alternativeName>
    </component>
    <component>
        <recommendedName>
            <fullName>2'-O-methyltransferase nsp16</fullName>
            <ecNumber>2.1.1.57</ecNumber>
        </recommendedName>
        <alternativeName>
            <fullName>nsp16</fullName>
        </alternativeName>
    </component>
</protein>
<keyword id="KW-1072">Activation of host autophagy by virus</keyword>
<keyword id="KW-0067">ATP-binding</keyword>
<keyword id="KW-1132">Decay of host mRNAs by virus</keyword>
<keyword id="KW-1015">Disulfide bond</keyword>
<keyword id="KW-0255">Endonuclease</keyword>
<keyword id="KW-1262">Eukaryotic host gene expression shutoff by virus</keyword>
<keyword id="KW-1193">Eukaryotic host translation shutoff by virus</keyword>
<keyword id="KW-0269">Exonuclease</keyword>
<keyword id="KW-0347">Helicase</keyword>
<keyword id="KW-1035">Host cytoplasm</keyword>
<keyword id="KW-1190">Host gene expression shutoff by virus</keyword>
<keyword id="KW-1043">Host membrane</keyword>
<keyword id="KW-1192">Host mRNA suppression by virus</keyword>
<keyword id="KW-0945">Host-virus interaction</keyword>
<keyword id="KW-0378">Hydrolase</keyword>
<keyword id="KW-1090">Inhibition of host innate immune response by virus</keyword>
<keyword id="KW-1114">Inhibition of host interferon signaling pathway by virus</keyword>
<keyword id="KW-1095">Inhibition of host ISG15 by virus</keyword>
<keyword id="KW-1100">Inhibition of host NF-kappa-B by virus</keyword>
<keyword id="KW-0922">Interferon antiviral system evasion</keyword>
<keyword id="KW-0456">Lyase</keyword>
<keyword id="KW-0464">Manganese</keyword>
<keyword id="KW-0472">Membrane</keyword>
<keyword id="KW-0479">Metal-binding</keyword>
<keyword id="KW-0489">Methyltransferase</keyword>
<keyword id="KW-1127">Modulation of host ubiquitin pathway by viral deubiquitinase</keyword>
<keyword id="KW-1130">Modulation of host ubiquitin pathway by virus</keyword>
<keyword id="KW-0540">Nuclease</keyword>
<keyword id="KW-0547">Nucleotide-binding</keyword>
<keyword id="KW-0548">Nucleotidyltransferase</keyword>
<keyword id="KW-0645">Protease</keyword>
<keyword id="KW-1185">Reference proteome</keyword>
<keyword id="KW-0677">Repeat</keyword>
<keyword id="KW-0688">Ribosomal frameshifting</keyword>
<keyword id="KW-0694">RNA-binding</keyword>
<keyword id="KW-0696">RNA-directed RNA polymerase</keyword>
<keyword id="KW-0788">Thiol protease</keyword>
<keyword id="KW-0808">Transferase</keyword>
<keyword id="KW-0812">Transmembrane</keyword>
<keyword id="KW-1133">Transmembrane helix</keyword>
<keyword id="KW-0833">Ubl conjugation pathway</keyword>
<keyword id="KW-0899">Viral immunoevasion</keyword>
<keyword id="KW-0693">Viral RNA replication</keyword>
<keyword id="KW-0862">Zinc</keyword>
<keyword id="KW-0863">Zinc-finger</keyword>
<gene>
    <name type="primary">rep</name>
    <name type="ORF">1a-1b</name>
</gene>
<reference key="1">
    <citation type="journal article" date="2007" name="J. Virol.">
        <title>Comparative analysis of twelve genomes of three novel group 2c and group 2d coronaviruses reveals unique group and subgroup features.</title>
        <authorList>
            <person name="Woo P.C.Y."/>
            <person name="Wang M."/>
            <person name="Lau S.K.P."/>
            <person name="Xu H.F."/>
            <person name="Poon R.W.S."/>
            <person name="Guo R."/>
            <person name="Wong B.H.L."/>
            <person name="Gao K."/>
            <person name="Tsoi H.-W."/>
            <person name="Huang Y."/>
            <person name="Li K.S.M."/>
            <person name="Lam C.S.F."/>
            <person name="Chan K.-H."/>
            <person name="Zheng B.-J."/>
            <person name="Yuen K.-Y."/>
        </authorList>
    </citation>
    <scope>NUCLEOTIDE SEQUENCE [GENOMIC RNA]</scope>
    <source>
        <strain>Isolate HKU5-1</strain>
    </source>
</reference>
<evidence type="ECO:0000250" key="1"/>
<evidence type="ECO:0000250" key="2">
    <source>
        <dbReference type="UniProtKB" id="P0C6X7"/>
    </source>
</evidence>
<evidence type="ECO:0000250" key="3">
    <source>
        <dbReference type="UniProtKB" id="P0DTD1"/>
    </source>
</evidence>
<evidence type="ECO:0000255" key="4"/>
<evidence type="ECO:0000255" key="5">
    <source>
        <dbReference type="PROSITE-ProRule" id="PRU00214"/>
    </source>
</evidence>
<evidence type="ECO:0000255" key="6">
    <source>
        <dbReference type="PROSITE-ProRule" id="PRU00444"/>
    </source>
</evidence>
<evidence type="ECO:0000255" key="7">
    <source>
        <dbReference type="PROSITE-ProRule" id="PRU00490"/>
    </source>
</evidence>
<evidence type="ECO:0000255" key="8">
    <source>
        <dbReference type="PROSITE-ProRule" id="PRU00539"/>
    </source>
</evidence>
<evidence type="ECO:0000255" key="9">
    <source>
        <dbReference type="PROSITE-ProRule" id="PRU00772"/>
    </source>
</evidence>
<evidence type="ECO:0000255" key="10">
    <source>
        <dbReference type="PROSITE-ProRule" id="PRU00986"/>
    </source>
</evidence>
<evidence type="ECO:0000255" key="11">
    <source>
        <dbReference type="PROSITE-ProRule" id="PRU01289"/>
    </source>
</evidence>
<evidence type="ECO:0000255" key="12">
    <source>
        <dbReference type="PROSITE-ProRule" id="PRU01290"/>
    </source>
</evidence>
<evidence type="ECO:0000255" key="13">
    <source>
        <dbReference type="PROSITE-ProRule" id="PRU01291"/>
    </source>
</evidence>
<evidence type="ECO:0000255" key="14">
    <source>
        <dbReference type="PROSITE-ProRule" id="PRU01292"/>
    </source>
</evidence>
<evidence type="ECO:0000255" key="15">
    <source>
        <dbReference type="PROSITE-ProRule" id="PRU01293"/>
    </source>
</evidence>
<evidence type="ECO:0000255" key="16">
    <source>
        <dbReference type="PROSITE-ProRule" id="PRU01294"/>
    </source>
</evidence>
<evidence type="ECO:0000255" key="17">
    <source>
        <dbReference type="PROSITE-ProRule" id="PRU01295"/>
    </source>
</evidence>
<evidence type="ECO:0000255" key="18">
    <source>
        <dbReference type="PROSITE-ProRule" id="PRU01296"/>
    </source>
</evidence>
<evidence type="ECO:0000255" key="19">
    <source>
        <dbReference type="PROSITE-ProRule" id="PRU01297"/>
    </source>
</evidence>
<evidence type="ECO:0000255" key="20">
    <source>
        <dbReference type="PROSITE-ProRule" id="PRU01298"/>
    </source>
</evidence>
<evidence type="ECO:0000255" key="21">
    <source>
        <dbReference type="PROSITE-ProRule" id="PRU01299"/>
    </source>
</evidence>
<evidence type="ECO:0000255" key="22">
    <source>
        <dbReference type="PROSITE-ProRule" id="PRU01300"/>
    </source>
</evidence>
<evidence type="ECO:0000255" key="23">
    <source>
        <dbReference type="PROSITE-ProRule" id="PRU01303"/>
    </source>
</evidence>
<evidence type="ECO:0000255" key="24">
    <source>
        <dbReference type="PROSITE-ProRule" id="PRU01305"/>
    </source>
</evidence>
<evidence type="ECO:0000255" key="25">
    <source>
        <dbReference type="PROSITE-ProRule" id="PRU01306"/>
    </source>
</evidence>
<evidence type="ECO:0000255" key="26">
    <source>
        <dbReference type="PROSITE-ProRule" id="PRU01307"/>
    </source>
</evidence>
<evidence type="ECO:0000255" key="27">
    <source>
        <dbReference type="PROSITE-ProRule" id="PRU01308"/>
    </source>
</evidence>
<evidence type="ECO:0000255" key="28">
    <source>
        <dbReference type="PROSITE-ProRule" id="PRU01333"/>
    </source>
</evidence>
<evidence type="ECO:0000255" key="29">
    <source>
        <dbReference type="PROSITE-ProRule" id="PRU01334"/>
    </source>
</evidence>
<evidence type="ECO:0000255" key="30">
    <source>
        <dbReference type="PROSITE-ProRule" id="PRU01335"/>
    </source>
</evidence>
<evidence type="ECO:0000255" key="31">
    <source>
        <dbReference type="PROSITE-ProRule" id="PRU01336"/>
    </source>
</evidence>
<evidence type="ECO:0000255" key="32">
    <source>
        <dbReference type="PROSITE-ProRule" id="PRU01337"/>
    </source>
</evidence>
<evidence type="ECO:0000255" key="33">
    <source>
        <dbReference type="PROSITE-ProRule" id="PRU01338"/>
    </source>
</evidence>
<evidence type="ECO:0000255" key="34">
    <source>
        <dbReference type="PROSITE-ProRule" id="PRU01344"/>
    </source>
</evidence>
<evidence type="ECO:0000305" key="35"/>
<accession>P0C6W4</accession>
<accession>A3EXC9</accession>
<organismHost>
    <name type="scientific">Pipistrellus abramus</name>
    <name type="common">Japanese pipistrelle</name>
    <name type="synonym">Pipistrellus javanicus abramus</name>
    <dbReference type="NCBI Taxonomy" id="105295"/>
</organismHost>
<sequence length="7182" mass="799932">MSFVAGVAPQGARGKYRAELNTEKRTDHVSLKASLCDAGDLVLKISPWFMDGESAYKHVSEQLSKGSKLLFVPQTLKGFIRHLPGPRVYLVERLTGGTYSDPFMVNQLAYQNAAGEGVIGTTLQGKRVGMFFPFDADLVTGEFQFLLRKKGFGGNRFRDAPWDYNWTPYSDLMDALEADPCGKYSQSLLKKLVGGDFTPIDQYMCGKNGKPIAEFAALMASEGITKLADVEAEVKSRTDSDRYIVFKNKLYRIVWNVQRKDVAYSKQSAFTMNSIVQLDTMEDVPRHSFTIGSEIQVIAPSTAVQANGHLNLKQRLLYAFYGKQAVSEPNYIYHSAYVDCTSCGKGSWLTGNAVQGFACDCGAHYCANDVDLQSSGLVRKNAVLLTTCPCNKDGECKHTLPQLVSMMTDKCDVEVVGKTFILTYGGVIYAYMGCSGGTMHFIPRAKSCVSKIGDAIFTGCTGTWSKVCETANLFLERAQHAINFVNEFVLTETVVALLSGTTSSIEELRDLCRNATFEKVRDYLTPRGWIVTMGSYIEGVINVGAAGVCNAALNAPFIVLSGLGESFKKVAATPWKLCSSLRETLDHYADSITYRVFPYDIPCDVTDYTALLLDCAVLTGASAYFVARYVDEKVEQLTNLVFSSCQSAVAAFVQACMSTYKATAKFISDMFTLIKVVSERLYVYTSVGFVVVGDYSSQLLKQFMHILSKAMQLLHTTVSWAGSKLPSVVYNGRDSLVFPSGTYYCVSTQGRSLQDQFDLVIPGDLSKKQIGILEPTPNSTTVDKKINTNVVEVVVGQLEPTKEHSPELVVGDYVIISNKIFVRSVEDSETVFYPLCTDGKIVPTLFRLKGGAPPKGVKFGGEQTKEITAVRSVSVDYDVHPVLDALLAGSELATFTVEKDLPVKDFVDVVKDEVIELLSKLLRGYNVDGFDLEDFADTPCYVYNAEGDLAWSSTMTFSVNPVEEVEEECDDDYVEDEYLSEEMLVEEDENSWAAAVEAVIPMEDVQLDTLVAEIDVSEPADDVAEQASTEEVEVPSACVLEASQVANAAEVESCEAEVSSSIPLHEDANAAKANDCAEGMPALDSTETVSKLSVDTPVGDVTQDDATSSNATVISEDVHTATHSKGLVAVPEVVPEKALGTSVERMRSTSEWTVVETSLKQETAVIVKNDSSAKPQRVKKPKAENPLKNFKHIVLNNDVTLVFGDAIAVARATEDCILVNAANTHLKHGGGIAAAIDRASGGLVQAESDDYVNFYGPLNVGDSTLLKGHGLATGILHVVGPDARANQDIQLLKRCYKAFNKYPLVVSPLISAGIFCVEPRVSLEYLLSVVHTKTYVVVNSEKVYNDLAAPKPPTGLTYSHEGWRGIIRNAKSFGFTCFICTDQSANAKLLKGRGVDLTKKTQTVDGVKYYLYSSKDPLTDIITAANACKGICAMPIGYVTHGLDLAQAGQQVKKITVPYVCLLASKDQVPILNSDVAVQTPEQSFINTVIANGGYHCWHLVTGELIVKGVSYRKLLNWSDQTICYADNKFYVVKGQIALPFDSLEKCRTYLTSRAAQQKNVDVLVTIDGVNFRTVVLNNTTTYRVQLGSVFYKGSDISDTIPTEKMSGEAVYLADNLSEAEKAVLSEVYGTADTAFLHRYYSLLALVKKWKYTVHDGVKSLKLNSNNCYVNVTMLMLDMLKEIKFIVPALQAAYLKHKGGDSTEFIALIMAYGDCTYGEPDDASRLLHTILSKAELTTQAKMVWRQWCNVCGVQDTTTTGLKACIYVGMNSLDELHATHEECCQCGDVRKRQLVEHNAPWLLLSGLNEAKVMTPTSQSAGPDYTAFNVFQGVETSVGHYLHVRVKDNLLYKYDSGSLSKTSDMKCKMTDVYYPKQRYSADCNVVVYSLDGNTWADVDPDLSAFYMKDGKYFTKKPVIEYSPATILSGSVYTNSCLVGHDGTIGSDAISSSFNNLLGFDNSKPVSKKLTYSFFPDFEGDVILTEYSTYDPIYKNGAMLHGKPILWVNNSKFDSALNKFNRATLRQVYDIAPVTLENKYTVLQDNQIQQVEVEAPKEDAKPQSPVQVAEDIDNKLPIIKCKGLKKPFVKDGYSFVNDPQGVNVIDTLGIDDLRALYVDRNLRLIVLKENNWSALFNIHTVEKGDLSVIAASGSITRRVKILLGASSLFAQFASVTVNVTTAMGKALGRMTRNVITNTGIIGQGFALLKMLLILPFTFWKSKNQSTVKVEVGALRTAGIVTTNVVKQCASAAYDVLVVKFKRIDWKSTLRLLFLICTTGLLLSSLYYLFLFHQVLTSDVMLDGAEGMLATYRELRSYLGIHSLCDGMVEAYRNVSYDVNDFCSNRSALCNWCLIGQDSLTRYSAFQMIQTHVTSYVINIDWVWFVMEFALAYVLYTSTFNVLLLVVSSQYFFSYTGAFVNWRSYNYLVSGYFFCVTHIPLLGLVRIYNFLACLWFLRRFYNHVINGCKDTACLLCYKRNRLTRVEASTVVCGSKRTFYIVANGGTSFCCRHNWNCVDCDTAGIGNTFICEEVANDLTTSLRRLVKPTDKSHYYVESVTVKDSVVQLHYSREGASCYERYPLCYFTNLDKLKFKEVCKTPTGIPEHNFLIYDSSDRGQENLARSACVYYSQVLSKPMLLVDSNMVTTVGDSREIASKMLDSYVNSFISLFGVNRDKLDKLVATARDCVKRGDDFQTVIKTFTDAARGPAGVESDVETSSIVDALQYAYKHDLQLTTEGFNNYVPSYIKPDSVATADLGCLIDLNAASVNQTSIRNANGACIWNSSDYMKLSDSLKRQIRIACRKCNIPFRLTTSRLRSADNILSVKFSATKLSGGAPKWLLKLRDFTWKSYCVVTLVVFAMAVLSYLCLPAFNMSQVSFHEDRILTYKVVENGIIRDITPSDTCFANKYQSFSKWFNEHYGGLFNNDISCPVTVAVIAGVAGARVPNLPANVAWVGRQIVLFVSRVFASSNNVCYTPTAEIPYERFSDSGCVLASECTLFRDAEGKINPYCYDPTVLPGASAYDQMKPHVRYDMYDSDMYIKFPEVVFESTLRITKTLATRYCRFGSCEDANEGVCITTNGSWAIYNDHYANKPGVYCGDNYFDIVRRLGLSLFQPVTYFQLSTSLALGVMLCIFLTIAFYYVNKVKRALADYTQCAVVAVAAALLNSLCLCFVVSNPLLVLPYTALYYYATFYLTGEPAFVMHVSWFVMFGTVVPIWMVFAYIVGVCLRHLLWVMAYFSKKHVEVFTDGKLNCSFQDAAANIFVINKDTYVALRNSITQDSYNRYLSMFNKYKYYSGAMDTASYREASAAHLCKALQVYSETGSDVLFQPPNCSVTSSVLQSGLVKMAAPSGVVENCMVQVTCGSMTLNGLWLDNYVWCPRHVMCPADQLSDPNYDALLVSKTNLSFIVQKNVGAPANLRVVGHTMVGTLLKLTVESANPQTPAYTFTTVKPGASFSVLACYNGRPTGVFMVNMRQNSTIKGSFLCGSCGSVGYTQEGNVINFCYMHQMELSNGTHTGCAFDGVMYGAFEDRQVHQVQLSDKYCTINIVAWLYAAILNGCNWFVKPNKTGIATFNEWAMSNQFTEFIGTQSVDMLAHKTGVSVEQLLYAIQTLHKGFQGKTILGNSMLEDEFTPDDVNMQVMGVVMQSGVKRISYGLVHWLFTTLLLAYVATLQLTKFTIWNYLFEVIPLQLTPLVLCVMACVMLTVKHKHTFLTLFLLPTAICLTYANIVYEPQTPVSSALIAVANWLNPASVYMRTTHTDLGVYLSLCFALAVVVRRLYRPNASNLALALGSAMVWFYTYTTGDCSSPLTYLMFLTTLTSDYTVTVFLAVNVAKFFARVVFLYAPHAGFIFPEVKLVLLMYLAVGYFCTVYFGVFSLLNLKLRVPLGVYDYTVSTQEFRYLTGNGLHAPRNSWEALRLNMKLIGIGGTPCIKIASVQSKLTDLKCTSVVLLSVLQQLHLEANSKAWAHCVKLHNDILAATDPTEAFDNFVCLFATLMSFSANVDLEALASDLLDHPSVLQATLSEFSHLASYAELEAAQSSYQKALNSGDASPQVLKALQKAVNIAKNAYEKDKAVARKLERMAEQAMTSMYKQARAEDKKAKIVSAMQTMLFGMIKKLDNDVLNGVISNARNGCVPLSVVPLCASNKLRVVIPDITIWNKVVTWPSLSYAGALWDISLINNVDGEVVKSSDVTETNESLTWPLVLECTRAASSAVTLQNNEIRPSGLKTMVVSAGIDHANCNTSSLAYYEPVEGRKMLMGILSENAHLKWAKVEGRDGFVNIELQPPCKFLIAGPKGPEVRYLYFVKNLNNLHRGQLLGHIAATVRLQAGSNTEFAINSSVLSAVTFSVDPGKAYLDFVNAGGAPLTNCVKMLTPKTGTGIAVSVKPEANADQDTYGGASVCLYCRAHIEHPDVTGVCKFKGKFVQVPLHIRDPVGFCLQNTPCNVCQFWIGHGCNCDALRGTTIPQSKDSNFLNRVRGSIVNARIEPCASGLTTDVVFRAFDICNYKAKVAGIGKYYKTNTCRFVEVDDEGHRLDSFFVVKRHTMENYELEKRCYDLVKDCDAVAVHDFFIFDVDKVKTPHIVRQRLTEYTMMDLVYALRHFDQNNCEVLKSILVKYGCCDASYFDNKLWFDFVENPNVISVYHKLGERIRQAVLNTVKFCDQMVKSGLVGVLTLDNQDLNGKWYDFGDFVITQPGAGVAIVDSYYSYLMPVLSMTNCLAAETHRDCDLTKPLIEWPLLEYDYTDYKIGLFEKYFKXWDQQYHPNCVNCTDDRCVLHCANFNVLFSMTLPGTSFGPIVRKIFVDGVPFVISCGYHYKELGLVMNMDVSLHRHRLSLKELMMYAADPAMHIASASALWDLRTPCFSVAALTTGLTFQTVRPGNFNKDFYDFVVSKGFFKEGSSVTLRHFFFAQDGHAAITDYSYYAYNLPTMCDIKQMLFCMEVVDRYFEIYDGGCLNASEVIVNNLDKSAGHPFNKFGKARVYYESLSYQEQDELFAMTKRNVLPTITQMNLKYAISAKNRARTVAGVSILSTMTNRQYHQKMLKSMAATRGSTCVIGTTKFYGGWDFMLKTLYKDVDNPHLMGWDYPKCDRAMPNMCRIFASLILARKHSTCCTNTDRFYRLANECAQVLSEYVLCGGGYYVKPGGTSSGDATTAYANSVFNILQATTANVSALMGANGNTIVDEEVKDMQFELYVNVYRKSQPDPKFVDRYYAFLNKHFSMMILSDDGVVCYNSDYATKGYIASIQNFKETLYYQNNVFMSEAKCWVETDLKKGPHEFCSQHTLFIKDGDDGYFLPYPDPSRILSAGCFVDDIVKTDGTLMVERFVSLAIDAYPLTKHDDPEYQNVFWVYLQYIEKLYKDLTGHMLDSYSVMLCGDNSAKFWEESFYRDLYTAPTTLQAVGSCVVCHSQTSLRCGTCIRRPFLCCKCCYDHVIATPHKMVLSVSPYVCNAPGCDVADVTKLYLGGMSYFCIDHRPVCSFPLCANGLVFGLYKNMCTGSPSVTEFNRLATCDWTESGDYTLANTTTEPLKLFAAETLRATEEASKQSYAIATIKEIVGERELLLVWEAGKAKPPLNRNYVFTGYHITKNSKVQLGEYVFERIDYSDAVSYKSSTTYKLAVGDIFVLTSHSVATLQAPTIVNQERYVKITGLYPTLTVPEEFANHVANFQKAGFSKFVTVQGPPGTGKSHFAIGLAIYYPTARVVYTACSHAAVDALCEKAFKYLNIAKCSRIIPAKARVECYDQFKVNETNSQYLFSTINALPETSADILVVDEVSMCTNYDLSVINARIKAKHIVYVGDPAQLPAPRTLLTRGTLEPENFNSVTRLMCNLGPDIFLSVCYRCPEEIVNTVSALVYNNKLVAKKPASGQCFKILYKGSVTHDASSAINRPQLNFVKSFIAANPNWSKAVFISPYNSQNAVARSVLGLTTQTVDSSQGSEYPYVIFCQTADTAHANNINRFNVAVTRAQKGILCVMTSQALFDSLEFAEVSLNNYKLQSQIVTGLYKDCSRESSGLHPAYAPTYVSVDDKYKTSDELCVNLNVPANVPYSRVISRMGFKLDASIPNYPKLFITRDEAIRQVRSWIGFDVEGAHASRNACGTNVPLQLGFSTGVNFVVQPVGVVDTEWGSMLTSIAARPPPGEQFKHLVPLMNKGAAWPIVRRRIVQMLSDTLDKLSDYCTFVCWAHGFELTSASYFCKIGKEQRCCMCNRRASTYSSPLHSYACWSHSSGYDYVYNPFFVDVQQWGYIGNLATNHDRYCSVHQGAHVASNDAVMTRCLAIHDCFIERVEWDITYPYISHEKRLNSCCRAVERNVVRAALLAGRFERVYDIGNPKGIPIVDDPVVDWHYYDAQPLSKKVQQLFYTEDCAKNFSDGLCLFWNCNVPRYPNNAIVCRFDTRVHSEFNLPGCDGGSLYVNKHAFHTPAYDASAFRDLKPLPFFYYSTTPCEVHGNGNMLEDIDYVPLKSAVCITACNLGGAVCRKHAAEYRDYMEAYNLVSASGFRLWCYKTFDVYNLWSTFTKIQGLENIAYNVIKQGHFTGVEGELPVAVVNDKIYTKSDVNDVCIFENKTTLPTNIAFELYAKRAVRSHPDFNLLRNLEVDVCYKFVLWDYERSNIYGSATIGVCKYTDIDVNSALNICFDIRDNGSLERFMSLPNGILISDRKVKNYPCIVSSNYAYFNGTLIRDNTGNSQSSDGEVKQPVTFYIYKKVNNEFVQFTDTYYTLGRTVSDFTPVSEMEKDFLALDSDVFIKKYKLEAYAFEHVVYGDFSRTTLGGLHLLIGLYKKHQEGHIIMEEMLKERATVHNYFVTESNTASFKAVCSVIDLKLDDFVDIIKAMDLSVVSKVVKIPIDLTMIEFMLWCKDGQVQTFYPRLQAINDWKPGLAMPSLFKVQNSNLEPCMLPNYKQSIPMPQGVHMNIAKYMQLCQYLNTCTIAVPANMRVMHFGAGSDKGVAPGSSVLRQWLPTDAILIDNDLNEYVSDADITLFGDCVTVRVGQQVDLLISDMYDPSTKVVGETNEAKALFFVYLCNFIKNNLALGGSVAIKITEHSWSAELYELMGRFAWWTVFCTNANASSSEGFLIGINYLGELKEVIDGNVMHANYIFWRNTTLMNLSTYSLFDLSRFPLKLKGTPVLQLKESQINELVISLLSQGKLIIRDNDTLSVSTDVLVNFYRKPHKRSKC</sequence>
<proteinExistence type="inferred from homology"/>
<organism>
    <name type="scientific">Bat coronavirus HKU5</name>
    <name type="common">BtCoV</name>
    <name type="synonym">BtCoV/HKU5/2004</name>
    <dbReference type="NCBI Taxonomy" id="694008"/>
    <lineage>
        <taxon>Viruses</taxon>
        <taxon>Riboviria</taxon>
        <taxon>Orthornavirae</taxon>
        <taxon>Pisuviricota</taxon>
        <taxon>Pisoniviricetes</taxon>
        <taxon>Nidovirales</taxon>
        <taxon>Cornidovirineae</taxon>
        <taxon>Coronaviridae</taxon>
        <taxon>Orthocoronavirinae</taxon>
        <taxon>Betacoronavirus</taxon>
        <taxon>Merbecovirus</taxon>
    </lineage>
</organism>
<name>R1AB_BCHK5</name>
<comment type="function">
    <text evidence="2">The replicase polyprotein of coronaviruses is a multifunctional protein: it contains the activities necessary for the transcription of negative stranded RNA, leader RNA, subgenomic mRNAs and progeny virion RNA as well as proteinases responsible for the cleavage of the polyprotein into functional products.</text>
</comment>
<comment type="function">
    <molecule>Host translation inhibitor nsp1</molecule>
    <text evidence="2">Inhibits host translation by interacting with the 40S ribosomal subunit. The nsp1-40S ribosome complex further induces an endonucleolytic cleavage near the 5'UTR of host mRNAs, targeting them for degradation. Viral mRNAs are not susceptible to nsp1-mediated endonucleolytic RNA cleavage thanks to the presence of a 5'-end leader sequence and are therefore protected from degradation. By suppressing host gene expression, nsp1 facilitates efficient viral gene expression in infected cells and evasion from host immune response.</text>
</comment>
<comment type="function">
    <molecule>Non-structural protein 2</molecule>
    <text evidence="2">May play a role in the modulation of host cell survival signaling pathway by interacting with host PHB and PHB2. Indeed, these two proteins play a role in maintaining the functional integrity of the mitochondria and protecting cells from various stresses.</text>
</comment>
<comment type="function">
    <molecule>Papain-like proteinase nsp3</molecule>
    <text evidence="2">Responsible for the cleavages located at the N-terminus of the replicase polyprotein. In addition, PL-PRO possesses a deubiquitinating/deISGylating activity and processes both 'Lys-48'- and 'Lys-63'-linked polyubiquitin chains from cellular substrates. Participates together with nsp4 in the assembly of virally-induced cytoplasmic double-membrane vesicles necessary for viral replication. Antagonizes innate immune induction of type I interferon by blocking the phosphorylation, dimerization and subsequent nuclear translocation of host IRF3. Also prevents host NF-kappa-B signaling.</text>
</comment>
<comment type="function">
    <molecule>Non-structural protein 4</molecule>
    <text evidence="2">Participates in the assembly of virally-induced cytoplasmic double-membrane vesicles necessary for viral replication.</text>
</comment>
<comment type="function">
    <molecule>3C-like proteinase nsp5</molecule>
    <text evidence="2 9">Cleaves the C-terminus of replicase polyprotein at 11 sites. Recognizes substrates containing the core sequence [ILMVF]-Q-|-[SGACN]. Also able to bind an ADP-ribose-1''-phosphate (ADRP).</text>
</comment>
<comment type="function">
    <molecule>Non-structural protein 6</molecule>
    <text evidence="2">Plays a role in the initial induction of autophagosomes from host endoplasmic reticulum. Later, limits the expansion of these phagosomes that are no longer able to deliver viral components to lysosomes.</text>
</comment>
<comment type="function">
    <molecule>Non-structural protein 7</molecule>
    <text evidence="2">Forms a hexadecamer with nsp8 (8 subunits of each) that may participate in viral replication by acting as a primase. Alternatively, may synthesize substantially longer products than oligonucleotide primers.</text>
</comment>
<comment type="function">
    <molecule>Non-structural protein 8</molecule>
    <text evidence="2">Forms a hexadecamer with nsp7 (8 subunits of each) that may participate in viral replication by acting as a primase. Alternatively, may synthesize substantially longer products than oligonucleotide primers.</text>
</comment>
<comment type="function">
    <molecule>Viral protein genome-linked nsp9</molecule>
    <text evidence="3">Forms a primer, NSP9-pU, which is utilized by the polymerase for the initiation of RNA chains. Interacts with ribosome signal recognition particle RNA (SRP). Together with NSP8, suppress protein integration into the cell membrane, thereby disrupting host immune defenses.</text>
</comment>
<comment type="function">
    <molecule>Non-structural protein 10</molecule>
    <text evidence="2">Plays a pivotal role in viral transcription by stimulating both nsp14 3'-5' exoribonuclease and nsp16 2'-O-methyltransferase activities. Therefore plays an essential role in viral mRNAs cap methylation.</text>
</comment>
<comment type="function">
    <molecule>Viral protein genome-linked nsp9</molecule>
    <text evidence="3">RNA-directed RNA polymerase that catalyzes the transcription of viral genomic and subgenomic RNAs. Acts in complex with nsp7 and nsp8 to transcribe both the minus and positive strands of genomic RNA. The kinase-like NiRAN domain of NSP12 attaches one or more nucleotides to the amino terminus of NSP9, forming a covalent RNA-protein intermediate that serves as transcription/replication primer. Subgenomic RNAs (sgRNAs) are formed by discontinuous transcription: The polymerase has the ability to pause at transcription-regulating sequences (TRS) and jump to the leader TRS, resulting in a major deletion. This creates a series of subgenomic RNAs that are replicated, transcribed and translated. In addition, Nsp12 is a subunit of the viral RNA capping enzyme that catalyzes the RNA guanylyltransferase reaction for genomic and sub-genomic RNAs. Subsequently, the NiRAN domain transfers RNA to GDP, and forms the core cap structure GpppA-RNA.</text>
</comment>
<comment type="function">
    <molecule>Helicase nsp13</molecule>
    <text evidence="2">Multi-functional protein with a zinc-binding domain in N-terminus displaying RNA and DNA duplex-unwinding activities with 5' to 3' polarity. Activity of helicase is dependent on magnesium.</text>
</comment>
<comment type="function">
    <molecule>Guanine-N7 methyltransferase nsp14</molecule>
    <text evidence="2">Plays a role in viral RNA synthesis through two distinct activities. The N7-guanine methyltransferase activity plays a role in the formation of the cap structure GpppA-RNA. The proofreading exoribonuclease reduces the sensitivity of the virus to RNA mutagens during replication. This activity acts on both ssRNA and dsRNA in a 3'-5' direction.</text>
</comment>
<comment type="function">
    <molecule>Uridylate-specific endoribonuclease nsp15</molecule>
    <text evidence="2">Plays a role in viral transcription/replication and prevents the simultaneous activation of host cell dsRNA sensors, such as MDA5/IFIH1, OAS, and PKR (By similarity). Acts by degrading the 5'-polyuridines generated during replication of the poly(A) region of viral genomic and subgenomic RNAs. Catalyzes a two-step reaction in which a 2'3'-cyclic phosphate (2'3'-cP) is first generated by 2'-O transesterification, which is then hydrolyzed to a 3'-phosphate (3'-P) (By similarity). If not degraded, poly(U) RNA would hybridize with poly(A) RNA tails and activate host dsRNA sensors (By similarity).</text>
</comment>
<comment type="function">
    <molecule>2'-O-methyltransferase nsp16</molecule>
    <text evidence="2">Methyltransferase that mediates mRNA cap 2'-O-ribose methylation to the 5'-cap structure of viral mRNAs. N7-methyl guanosine cap is a prerequisite for binding of nsp16. Therefore plays an essential role in viral mRNAs cap methylation which is essential to evade immune system.</text>
</comment>
<comment type="catalytic activity">
    <molecule>RNA-directed RNA polymerase nsp12</molecule>
    <reaction evidence="8">
        <text>RNA(n) + a ribonucleoside 5'-triphosphate = RNA(n+1) + diphosphate</text>
        <dbReference type="Rhea" id="RHEA:21248"/>
        <dbReference type="Rhea" id="RHEA-COMP:14527"/>
        <dbReference type="Rhea" id="RHEA-COMP:17342"/>
        <dbReference type="ChEBI" id="CHEBI:33019"/>
        <dbReference type="ChEBI" id="CHEBI:61557"/>
        <dbReference type="ChEBI" id="CHEBI:140395"/>
        <dbReference type="EC" id="2.7.7.48"/>
    </reaction>
</comment>
<comment type="catalytic activity">
    <molecule>Helicase nsp13</molecule>
    <reaction>
        <text>ATP + H2O = ADP + phosphate + H(+)</text>
        <dbReference type="Rhea" id="RHEA:13065"/>
        <dbReference type="ChEBI" id="CHEBI:15377"/>
        <dbReference type="ChEBI" id="CHEBI:15378"/>
        <dbReference type="ChEBI" id="CHEBI:30616"/>
        <dbReference type="ChEBI" id="CHEBI:43474"/>
        <dbReference type="ChEBI" id="CHEBI:456216"/>
        <dbReference type="EC" id="3.6.4.12"/>
    </reaction>
</comment>
<comment type="catalytic activity">
    <molecule>Helicase nsp13</molecule>
    <reaction>
        <text>ATP + H2O = ADP + phosphate + H(+)</text>
        <dbReference type="Rhea" id="RHEA:13065"/>
        <dbReference type="ChEBI" id="CHEBI:15377"/>
        <dbReference type="ChEBI" id="CHEBI:15378"/>
        <dbReference type="ChEBI" id="CHEBI:30616"/>
        <dbReference type="ChEBI" id="CHEBI:43474"/>
        <dbReference type="ChEBI" id="CHEBI:456216"/>
        <dbReference type="EC" id="3.6.4.13"/>
    </reaction>
</comment>
<comment type="catalytic activity">
    <molecule>Papain-like proteinase nsp3</molecule>
    <reaction>
        <text>Thiol-dependent hydrolysis of ester, thioester, amide, peptide and isopeptide bonds formed by the C-terminal Gly of ubiquitin (a 76-residue protein attached to proteins as an intracellular targeting signal).</text>
        <dbReference type="EC" id="3.4.19.12"/>
    </reaction>
</comment>
<comment type="catalytic activity">
    <molecule>2'-O-methyltransferase nsp16</molecule>
    <reaction evidence="2">
        <text>a 5'-end (N(7)-methyl 5'-triphosphoguanosine)-ribonucleoside in mRNA + S-adenosyl-L-methionine = a 5'-end (N(7)-methyl 5'-triphosphoguanosine)-(2'-O-methyl-ribonucleoside) in mRNA + S-adenosyl-L-homocysteine + H(+)</text>
        <dbReference type="Rhea" id="RHEA:67020"/>
        <dbReference type="Rhea" id="RHEA-COMP:17167"/>
        <dbReference type="Rhea" id="RHEA-COMP:17168"/>
        <dbReference type="ChEBI" id="CHEBI:15378"/>
        <dbReference type="ChEBI" id="CHEBI:57856"/>
        <dbReference type="ChEBI" id="CHEBI:59789"/>
        <dbReference type="ChEBI" id="CHEBI:156461"/>
        <dbReference type="ChEBI" id="CHEBI:167609"/>
        <dbReference type="EC" id="2.1.1.57"/>
    </reaction>
</comment>
<comment type="catalytic activity">
    <molecule>Uridylate-specific endoribonuclease nsp15</molecule>
    <reaction evidence="2">
        <text>uridylyl-uridylyl-ribonucleotide-RNA = a 3'-end uridylyl-2',3'-cyclophospho-uridine-RNA + a 5'-end dephospho-ribonucleoside-RNA</text>
        <dbReference type="Rhea" id="RHEA:67732"/>
        <dbReference type="Rhea" id="RHEA-COMP:13936"/>
        <dbReference type="Rhea" id="RHEA-COMP:17334"/>
        <dbReference type="Rhea" id="RHEA-COMP:17335"/>
        <dbReference type="ChEBI" id="CHEBI:138284"/>
        <dbReference type="ChEBI" id="CHEBI:173079"/>
        <dbReference type="ChEBI" id="CHEBI:173080"/>
    </reaction>
</comment>
<comment type="catalytic activity">
    <molecule>RNA-directed RNA polymerase nsp12</molecule>
    <reaction evidence="3">
        <text>a 5'-end diphospho-ribonucleoside in mRNA + GTP + H(+) = a 5'-end (5'-triphosphoguanosine)-ribonucleoside in mRNA + diphosphate</text>
        <dbReference type="Rhea" id="RHEA:67012"/>
        <dbReference type="Rhea" id="RHEA-COMP:17165"/>
        <dbReference type="Rhea" id="RHEA-COMP:17166"/>
        <dbReference type="ChEBI" id="CHEBI:15378"/>
        <dbReference type="ChEBI" id="CHEBI:33019"/>
        <dbReference type="ChEBI" id="CHEBI:37565"/>
        <dbReference type="ChEBI" id="CHEBI:167616"/>
        <dbReference type="ChEBI" id="CHEBI:167617"/>
        <dbReference type="EC" id="2.7.7.50"/>
    </reaction>
    <physiologicalReaction direction="left-to-right" evidence="3">
        <dbReference type="Rhea" id="RHEA:67013"/>
    </physiologicalReaction>
</comment>
<comment type="catalytic activity">
    <molecule>Guanine-N7 methyltransferase nsp14</molecule>
    <reaction evidence="2">
        <text>a 5'-end (5'-triphosphoguanosine)-ribonucleoside in mRNA + S-adenosyl-L-methionine = a 5'-end (N(7)-methyl 5'-triphosphoguanosine)-ribonucleoside in mRNA + S-adenosyl-L-homocysteine</text>
        <dbReference type="Rhea" id="RHEA:67008"/>
        <dbReference type="Rhea" id="RHEA-COMP:17166"/>
        <dbReference type="Rhea" id="RHEA-COMP:17167"/>
        <dbReference type="ChEBI" id="CHEBI:57856"/>
        <dbReference type="ChEBI" id="CHEBI:59789"/>
        <dbReference type="ChEBI" id="CHEBI:156461"/>
        <dbReference type="ChEBI" id="CHEBI:167617"/>
        <dbReference type="EC" id="2.1.1.56"/>
    </reaction>
    <physiologicalReaction direction="left-to-right" evidence="2">
        <dbReference type="Rhea" id="RHEA:67009"/>
    </physiologicalReaction>
</comment>
<comment type="cofactor">
    <molecule>Uridylate-specific endoribonuclease nsp15</molecule>
    <cofactor evidence="2">
        <name>Mn(2+)</name>
        <dbReference type="ChEBI" id="CHEBI:29035"/>
    </cofactor>
    <text evidence="2">Likely affects Nsp15 binding to RNA.</text>
</comment>
<comment type="cofactor">
    <molecule>RNA-directed RNA polymerase nsp12</molecule>
    <cofactor evidence="3">
        <name>Mg(2+)</name>
        <dbReference type="ChEBI" id="CHEBI:18420"/>
    </cofactor>
</comment>
<comment type="subunit">
    <molecule>Non-structural protein 2</molecule>
    <text evidence="2">Interacts with host PHB and PHB2.</text>
</comment>
<comment type="subunit">
    <molecule>Non-structural protein 4</molecule>
    <text evidence="2">Interacts with papain-like protease nsp3 and non-structural protein 6.</text>
</comment>
<comment type="subunit">
    <molecule>3C-like proteinase nsp5</molecule>
    <text evidence="2">Monomer. Homodimer. Only the homodimer shows catalytic activity.</text>
</comment>
<comment type="subunit">
    <molecule>Non-structural protein 7</molecule>
    <text evidence="3">Interacts with nsp8 and nsp12 to form the replication-transcription complex (RTC): nsp12, nsp7, two subunits of nsp8, and up to two subunits of nsp13.</text>
</comment>
<comment type="subunit">
    <molecule>Non-structural protein 8</molecule>
    <text evidence="3">Interacts with nsp7, nsp13 and nsp12 to form the replication-transcription complex (RTC): nsp12, nsp7, two subunits of nsp8, and up to two subunits of nsp13.</text>
</comment>
<comment type="subunit">
    <molecule>Viral protein genome-linked nsp9</molecule>
    <text evidence="3">Interacts with nsp12.</text>
</comment>
<comment type="subunit">
    <molecule>Non-structural protein 10</molecule>
    <text evidence="3">Interacts with proofreading exoribonuclease nsp14 and 2'-O-methyltransferase nsp16; these interactions enhance nsp14 and nsp16 enzymatic activities.</text>
</comment>
<comment type="subunit">
    <molecule>RNA-directed RNA polymerase nsp12</molecule>
    <text evidence="3">Interacts with nsp7 and nsp8 to form the replication-transcription complex (RTC): nsp12, nsp7, two subunits of nsp8, and up to two subunits of nsp13. Interacts with nsp9.</text>
</comment>
<comment type="subunit">
    <molecule>Helicase nsp13</molecule>
    <text evidence="3">Interacts with nsp8 to form the replication-transcription complex (RTC): nsp12, nsp7, two subunits of nsp8, and up to two subunits of nsp13.</text>
</comment>
<comment type="subcellular location">
    <molecule>Papain-like proteinase nsp3</molecule>
    <subcellularLocation>
        <location>Host membrane</location>
        <topology>Multi-pass membrane protein</topology>
    </subcellularLocation>
    <subcellularLocation>
        <location evidence="2">Host cytoplasm</location>
    </subcellularLocation>
</comment>
<comment type="subcellular location">
    <molecule>Non-structural protein 4</molecule>
    <subcellularLocation>
        <location>Host membrane</location>
        <topology>Multi-pass membrane protein</topology>
    </subcellularLocation>
    <subcellularLocation>
        <location>Host cytoplasm</location>
    </subcellularLocation>
    <text evidence="2">Localizes in virally-induced cytoplasmic double-membrane vesicles.</text>
</comment>
<comment type="subcellular location">
    <molecule>Non-structural protein 6</molecule>
    <subcellularLocation>
        <location evidence="35">Host membrane</location>
        <topology evidence="35">Multi-pass membrane protein</topology>
    </subcellularLocation>
</comment>
<comment type="subcellular location">
    <molecule>Non-structural protein 7</molecule>
    <subcellularLocation>
        <location evidence="1">Host cytoplasm</location>
        <location evidence="1">Host perinuclear region</location>
    </subcellularLocation>
    <text evidence="1">nsp7, nsp8, nsp9 and nsp10 are localized in cytoplasmic foci, largely perinuclear. Late in infection, they merge into confluent complexes (By similarity).</text>
</comment>
<comment type="subcellular location">
    <molecule>Non-structural protein 8</molecule>
    <subcellularLocation>
        <location evidence="1">Host cytoplasm</location>
        <location evidence="1">Host perinuclear region</location>
    </subcellularLocation>
    <text evidence="1">nsp7, nsp8, nsp9 and nsp10 are localized in cytoplasmic foci, largely perinuclear. Late in infection, they merge into confluent complexes (By similarity).</text>
</comment>
<comment type="subcellular location">
    <molecule>Viral protein genome-linked nsp9</molecule>
    <subcellularLocation>
        <location evidence="1">Host cytoplasm</location>
        <location evidence="1">Host perinuclear region</location>
    </subcellularLocation>
    <text evidence="1">nsp7, nsp8, nsp9 and nsp10 are localized in cytoplasmic foci, largely perinuclear. Late in infection, they merge into confluent complexes (By similarity).</text>
</comment>
<comment type="subcellular location">
    <molecule>Non-structural protein 10</molecule>
    <subcellularLocation>
        <location evidence="1">Host cytoplasm</location>
        <location evidence="1">Host perinuclear region</location>
    </subcellularLocation>
    <text evidence="1">nsp7, nsp8, nsp9 and nsp10 are localized in cytoplasmic foci, largely perinuclear. Late in infection, they merge into confluent complexes (By similarity).</text>
</comment>
<comment type="subcellular location">
    <molecule>Helicase nsp13</molecule>
    <subcellularLocation>
        <location evidence="35">Host endoplasmic reticulum-Golgi intermediate compartment</location>
    </subcellularLocation>
    <text evidence="1">The helicase interacts with the N protein in membranous complexes and colocalizes with sites of synthesis of new viral RNA.</text>
</comment>
<comment type="subcellular location">
    <molecule>Uridylate-specific endoribonuclease nsp15</molecule>
    <subcellularLocation>
        <location evidence="1">Host cytoplasm</location>
        <location evidence="1">Host perinuclear region</location>
    </subcellularLocation>
</comment>
<comment type="alternative products">
    <event type="ribosomal frameshifting"/>
    <isoform>
        <id>P0C6W4-1</id>
        <name>Replicase polyprotein 1ab</name>
        <name>pp1ab</name>
        <sequence type="displayed"/>
    </isoform>
    <isoform>
        <id>P0C6T5-1</id>
        <name>Replicase polyprotein 1a</name>
        <name>pp1a</name>
        <name>ORF1a polyprotein</name>
        <sequence type="external"/>
    </isoform>
</comment>
<comment type="domain">
    <text evidence="1">The hydrophobic domains (HD) could mediate the membrane association of the replication complex and thereby alter the architecture of the host cell membrane.</text>
</comment>
<comment type="PTM">
    <text evidence="1">Specific enzymatic cleavages in vivo by its own proteases yield mature proteins. 3CL-PRO and PL-PRO proteinases are autocatalytically processed (By similarity).</text>
</comment>
<comment type="miscellaneous">
    <molecule>Isoform Replicase polyprotein 1ab</molecule>
    <text>Produced by -1 ribosomal frameshifting at the 1a-1b genes boundary.</text>
</comment>
<comment type="similarity">
    <text evidence="35">Belongs to the coronaviruses polyprotein 1ab family.</text>
</comment>